<protein>
    <recommendedName>
        <fullName evidence="44">Broad substrate specificity ATP-binding cassette transporter ABCG2</fullName>
        <ecNumber evidence="4 35">7.6.2.2</ecNumber>
    </recommendedName>
    <alternativeName>
        <fullName>ATP-binding cassette sub-family G member 2</fullName>
    </alternativeName>
    <alternativeName>
        <fullName>Breast cancer resistance protein</fullName>
    </alternativeName>
    <alternativeName>
        <fullName>CDw338</fullName>
    </alternativeName>
    <alternativeName>
        <fullName>Mitoxantrone resistance-associated protein</fullName>
    </alternativeName>
    <alternativeName>
        <fullName>Placenta-specific ATP-binding cassette transporter</fullName>
    </alternativeName>
    <alternativeName>
        <fullName>Urate exporter</fullName>
    </alternativeName>
    <cdAntigenName>CD338</cdAntigenName>
</protein>
<feature type="chain" id="PRO_0000093386" description="Broad substrate specificity ATP-binding cassette transporter ABCG2">
    <location>
        <begin position="1"/>
        <end position="655"/>
    </location>
</feature>
<feature type="topological domain" description="Cytoplasmic" evidence="2">
    <location>
        <begin position="1"/>
        <end position="395"/>
    </location>
</feature>
<feature type="transmembrane region" description="Helical" evidence="2">
    <location>
        <begin position="396"/>
        <end position="416"/>
    </location>
</feature>
<feature type="topological domain" description="Extracellular" evidence="2">
    <location>
        <begin position="417"/>
        <end position="428"/>
    </location>
</feature>
<feature type="transmembrane region" description="Helical" evidence="2">
    <location>
        <begin position="429"/>
        <end position="449"/>
    </location>
</feature>
<feature type="topological domain" description="Cytoplasmic" evidence="2">
    <location>
        <begin position="450"/>
        <end position="477"/>
    </location>
</feature>
<feature type="transmembrane region" description="Helical" evidence="2">
    <location>
        <begin position="478"/>
        <end position="498"/>
    </location>
</feature>
<feature type="topological domain" description="Extracellular" evidence="2">
    <location>
        <begin position="499"/>
        <end position="506"/>
    </location>
</feature>
<feature type="transmembrane region" description="Helical" evidence="2">
    <location>
        <begin position="507"/>
        <end position="527"/>
    </location>
</feature>
<feature type="topological domain" description="Cytoplasmic" evidence="2">
    <location>
        <begin position="528"/>
        <end position="535"/>
    </location>
</feature>
<feature type="transmembrane region" description="Helical" evidence="2">
    <location>
        <begin position="536"/>
        <end position="556"/>
    </location>
</feature>
<feature type="topological domain" description="Extracellular" evidence="2">
    <location>
        <begin position="557"/>
        <end position="630"/>
    </location>
</feature>
<feature type="transmembrane region" description="Helical" evidence="2">
    <location>
        <begin position="631"/>
        <end position="651"/>
    </location>
</feature>
<feature type="topological domain" description="Cytoplasmic" evidence="2">
    <location>
        <begin position="652"/>
        <end position="655"/>
    </location>
</feature>
<feature type="domain" description="ABC transporter" evidence="3">
    <location>
        <begin position="37"/>
        <end position="286"/>
    </location>
</feature>
<feature type="domain" description="ABC transmembrane type-2">
    <location>
        <begin position="389"/>
        <end position="651"/>
    </location>
</feature>
<feature type="binding site" evidence="3 33 52 53">
    <location>
        <begin position="80"/>
        <end position="87"/>
    </location>
    <ligand>
        <name>ATP</name>
        <dbReference type="ChEBI" id="CHEBI:30616"/>
    </ligand>
</feature>
<feature type="binding site" evidence="33 52 53">
    <location>
        <begin position="184"/>
        <end position="190"/>
    </location>
    <ligand>
        <name>ATP</name>
        <dbReference type="ChEBI" id="CHEBI:30616"/>
    </ligand>
</feature>
<feature type="binding site" evidence="33 52 53">
    <location>
        <position position="211"/>
    </location>
    <ligand>
        <name>ATP</name>
        <dbReference type="ChEBI" id="CHEBI:30616"/>
    </ligand>
</feature>
<feature type="binding site" evidence="33 52 53">
    <location>
        <position position="243"/>
    </location>
    <ligand>
        <name>ATP</name>
        <dbReference type="ChEBI" id="CHEBI:30616"/>
    </ligand>
</feature>
<feature type="site" description="Not glycosylated" evidence="15">
    <location>
        <position position="418"/>
    </location>
</feature>
<feature type="site" description="Not glycosylated" evidence="15">
    <location>
        <position position="557"/>
    </location>
</feature>
<feature type="modified residue" description="Phosphothreonine; by PIM1" evidence="19">
    <location>
        <position position="362"/>
    </location>
</feature>
<feature type="glycosylation site" description="N-linked (GlcNAc...) asparagine" evidence="15 31 50 51">
    <location>
        <position position="596"/>
    </location>
</feature>
<feature type="disulfide bond" evidence="18 31 50 51">
    <location>
        <begin position="592"/>
        <end position="608"/>
    </location>
</feature>
<feature type="disulfide bond" description="Interchain" evidence="18 31 50 51">
    <location>
        <position position="603"/>
    </location>
</feature>
<feature type="splice variant" id="VSP_014232" description="In isoform 2." evidence="43">
    <original>IFSGLLVNLTTIASWLSWLQYFSIPRYGFTALQHNEFLGQNFCPGLNATGNNPCNYATCTGE</original>
    <variation>VCWSISQPLHLGCHGFSTSAFHDMDLRLCSIMNFWDKTSAQDSMQQETILVTMQHVLAKNIW</variation>
    <location>
        <begin position="550"/>
        <end position="611"/>
    </location>
</feature>
<feature type="splice variant" id="VSP_014233" description="In isoform 2." evidence="43">
    <location>
        <begin position="612"/>
        <end position="655"/>
    </location>
</feature>
<feature type="sequence variant" id="VAR_020779" description="Found in Jr(a-) blood group phenotype; dbSNP:rs2231137." evidence="5 7 16 17 28 40">
    <original>V</original>
    <variation>M</variation>
    <location>
        <position position="12"/>
    </location>
</feature>
<feature type="sequence variant" id="VAR_067363" description="In dbSNP:rs1319203095." evidence="17">
    <original>S</original>
    <variation>L</variation>
    <location>
        <position position="13"/>
    </location>
</feature>
<feature type="sequence variant" id="VAR_020780" description="Associated with high serum levels of uric acid and increased risk of gout; results in lower urate transport rates compared to wild-type; decreased protein abundance; dbSNP:rs2231142." evidence="5 7 11 16 17 21 34 35 40 41">
    <original>Q</original>
    <variation>K</variation>
    <location>
        <position position="141"/>
    </location>
</feature>
<feature type="sequence variant" id="VAR_082302" description="Loss of protein expression; loss of localization to the plasma membrane; dbSNP:rs372192400." evidence="34 35">
    <original>R</original>
    <variation>W</variation>
    <location>
        <position position="147"/>
    </location>
</feature>
<feature type="sequence variant" id="VAR_082303" description="Decreased protein abundance; no effect on localization to the plasma membrane; no effect on substrate transmembrane transport; decreased ATPase activity; no effect on ATPase-coupled transmembrane transporter activity; dbSNP:rs753759474." evidence="34 35">
    <original>T</original>
    <variation>M</variation>
    <location>
        <position position="153"/>
    </location>
</feature>
<feature type="sequence variant" id="VAR_067364" description="In dbSNP:rs528655917." evidence="17">
    <original>R</original>
    <variation>Q</variation>
    <location>
        <position position="160"/>
    </location>
</feature>
<feature type="sequence variant" id="VAR_022704" description="In dbSNP:rs1061017." evidence="9 38">
    <original>Q</original>
    <variation>E</variation>
    <location>
        <position position="166"/>
    </location>
</feature>
<feature type="sequence variant" id="VAR_022705" description="In dbSNP:rs12721643." evidence="7">
    <original>I</original>
    <variation>L</variation>
    <location>
        <position position="206"/>
    </location>
</feature>
<feature type="sequence variant" id="VAR_022706" description="In dbSNP:rs1061018." evidence="9 38">
    <original>F</original>
    <variation>S</variation>
    <location>
        <position position="208"/>
    </location>
</feature>
<feature type="sequence variant" id="VAR_022707" description="In dbSNP:rs3116448.">
    <original>S</original>
    <variation>P</variation>
    <location>
        <position position="248"/>
    </location>
</feature>
<feature type="sequence variant" id="VAR_030357" description="In dbSNP:rs41282401." evidence="40">
    <original>D</original>
    <variation>H</variation>
    <location>
        <position position="296"/>
    </location>
</feature>
<feature type="sequence variant" id="VAR_022443" evidence="42">
    <original>T</original>
    <variation>P</variation>
    <location>
        <position position="316"/>
    </location>
</feature>
<feature type="sequence variant" id="VAR_067365" description="In dbSNP:rs138606116." evidence="17">
    <original>G</original>
    <variation>R</variation>
    <location>
        <position position="354"/>
    </location>
</feature>
<feature type="sequence variant" id="VAR_082304" description="No effect on protein abundance; no effect on localization to the plasma membrane; no effect on ATPase activity; no effect on substrate transmembrane transport." evidence="34 35">
    <location>
        <position position="360"/>
    </location>
</feature>
<feature type="sequence variant" id="VAR_082305" description="Decreased protein abundance; decreased localization to the plasma membrane; no effect on ATPase-coupled transmembrane transporter activity; dbSNP:rs752626614." evidence="34 35">
    <original>F</original>
    <variation>C</variation>
    <location>
        <position position="373"/>
    </location>
</feature>
<feature type="sequence variant" id="VAR_082306" description="No effect on protein abundance; no effect on substrate transmembrane transport; dbSNP:rs199854112." evidence="34">
    <original>T</original>
    <variation>A</variation>
    <location>
        <position position="421"/>
    </location>
</feature>
<feature type="sequence variant" id="VAR_018349" evidence="12 17">
    <original>F</original>
    <variation>L</variation>
    <location>
        <position position="431"/>
    </location>
</feature>
<feature type="sequence variant" id="VAR_082307" description="No effect on protein abundance; no effect on localization to the plasma membrane; increased ATPase activity; decreased ATPase-coupled transmembrane transporter activity; dbSNP:rs769734146." evidence="34 35">
    <original>T</original>
    <variation>M</variation>
    <location>
        <position position="434"/>
    </location>
</feature>
<feature type="sequence variant" id="VAR_067366" description="In dbSNP:rs1354553769." evidence="17">
    <original>S</original>
    <variation>N</variation>
    <location>
        <position position="441"/>
    </location>
</feature>
<feature type="sequence variant" id="VAR_082308" description="No effect on protein abundance; no effect on localization to the plasma membrane; no effect on ATPase activity; decreased ATPase-coupled transmembrane transporter activity; dbSNP:rs1274428653." evidence="34 35">
    <original>S</original>
    <variation>P</variation>
    <location>
        <position position="476"/>
    </location>
</feature>
<feature type="sequence variant" id="VAR_018350" description="In dbSNP:rs192169063." evidence="12 17">
    <original>F</original>
    <variation>L</variation>
    <location>
        <position position="489"/>
    </location>
</feature>
<feature type="sequence variant" id="VAR_030358" description="In dbSNP:rs45605536." evidence="40">
    <original>A</original>
    <variation>T</variation>
    <location>
        <position position="528"/>
    </location>
</feature>
<feature type="sequence variant" id="VAR_022708" description="In dbSNP:rs9282571.">
    <original>F</original>
    <variation>I</variation>
    <location>
        <position position="571"/>
    </location>
</feature>
<feature type="sequence variant" id="VAR_082309" description="Decreased protein abundance; loss of localization to the plasma membrane; dbSNP:rs200894058." evidence="34">
    <original>S</original>
    <variation>R</variation>
    <location>
        <position position="572"/>
    </location>
</feature>
<feature type="sequence variant" id="VAR_035355" description="In dbSNP:rs34264773." evidence="7">
    <original>N</original>
    <variation>Y</variation>
    <location>
        <position position="590"/>
    </location>
</feature>
<feature type="sequence variant" id="VAR_022709" description="No effect on protein abundance; no effect on substrate transmembrane transport; dbSNP:rs34783571." evidence="16 34">
    <original>D</original>
    <variation>N</variation>
    <location>
        <position position="620"/>
    </location>
</feature>
<feature type="mutagenesis site" description="Decreased protein abundance. No effect on substrate transmembrane transport." evidence="35">
    <original>M</original>
    <variation>V</variation>
    <location>
        <position position="71"/>
    </location>
</feature>
<feature type="mutagenesis site" description="Decreased protein abundance. Decreased localization to the plasma membrane and retained intracellularly. Loss of ATPase-coupled transmembrane transporter activity." evidence="14 35">
    <original>K</original>
    <variation>M</variation>
    <location>
        <position position="86"/>
    </location>
</feature>
<feature type="mutagenesis site" description="Decreased estrone-3 sulfate ATPase-coupled transmembrane transporter activity. Decreased substrate-induced ATP hydrolysis. Loss of ATP-dependent itaconate export resulting in itaconate cytosolic accumulation." evidence="31 33 37">
    <original>E</original>
    <variation>Q</variation>
    <location>
        <position position="211"/>
    </location>
</feature>
<feature type="mutagenesis site" description="Loss of phosphorylation by PIM1. Decreased localization to the plasma membrane. Decreased homooligomerization. Loss of function in resistance to drug treatment." evidence="19">
    <original>T</original>
    <variation>A</variation>
    <location>
        <position position="362"/>
    </location>
</feature>
<feature type="mutagenesis site" description="Loss of phosphorylation by PIM1. Constitutive drug resistance independent of PIM1." evidence="19">
    <original>T</original>
    <variation>D</variation>
    <location>
        <position position="362"/>
    </location>
</feature>
<feature type="mutagenesis site" description="Loss of protein expression." evidence="35">
    <original>R</original>
    <variation>C</variation>
    <location>
        <position position="383"/>
    </location>
</feature>
<feature type="mutagenesis site" description="No effect." evidence="15">
    <original>N</original>
    <variation>Q</variation>
    <location>
        <position position="418"/>
    </location>
</feature>
<feature type="mutagenesis site" description="No effect on stability. Increased estrone-3 sulfate ATPase-coupled transmembrane transporter activity. Increased substrate-induced ATP hydrolysis. Increased substrate transport." evidence="33">
    <original>T</original>
    <variation>A</variation>
    <location>
        <position position="435"/>
    </location>
</feature>
<feature type="mutagenesis site" description="No effect on stability. Decreased estrone-3 sulfate ATPase-coupled transmembrane transporter activity. Decreased substrate-induced ATP hydrolysis. Decreased substrate transport." evidence="33">
    <original>T</original>
    <variation>F</variation>
    <location>
        <position position="435"/>
    </location>
</feature>
<feature type="mutagenesis site" description="No effect on stability. Decreased estrone-3 sulfate ATPase-coupled transmembrane transporter activity. Decreased substrate-induced ATP hydrolysis. Decreased substrate transport." evidence="33">
    <original>N</original>
    <variation>A</variation>
    <location>
        <position position="436"/>
    </location>
</feature>
<feature type="mutagenesis site" description="No effect on stability. Decreased estrone-3 sulfate ATPase-coupled transmembrane transporter activity. Decreased substrate-induced ATP hydrolysis. Decreased substrate transport." evidence="33">
    <original>F</original>
    <variation>A</variation>
    <location>
        <position position="439"/>
    </location>
</feature>
<feature type="mutagenesis site" description="Decreases ATPase activity." evidence="13">
    <original>R</original>
    <variation>D</variation>
    <location>
        <position position="482"/>
    </location>
</feature>
<feature type="mutagenesis site" description="Increases ATPase activity." evidence="13">
    <original>R</original>
    <variation>G</variation>
    <variation>N</variation>
    <variation>S</variation>
    <variation>T</variation>
    <location>
        <position position="482"/>
    </location>
</feature>
<feature type="mutagenesis site" description="No change in ATPase activity." evidence="13">
    <original>R</original>
    <variation>K</variation>
    <variation>I</variation>
    <variation>M</variation>
    <variation>Y</variation>
    <location>
        <position position="482"/>
    </location>
</feature>
<feature type="mutagenesis site" description="Decreases transport activity." evidence="13">
    <original>R</original>
    <variation>T</variation>
    <variation>Y</variation>
    <location>
        <position position="482"/>
    </location>
</feature>
<feature type="mutagenesis site" description="No effect on stability. No effect on estrone-3 sulfate ATPase-coupled transmembrane transporter activity. No effect on substrate-induced ATP hydrolysis. No effect on substrate transport." evidence="33">
    <original>V</original>
    <variation>A</variation>
    <location>
        <position position="546"/>
    </location>
</feature>
<feature type="mutagenesis site" description="No effect on stability. Decreased estrone-3 sulfate ATPase-coupled transmembrane transporter activity. Increased basal and substrate-induced ATP hydrolysis. Decreased substrate transport." evidence="33">
    <original>V</original>
    <variation>F</variation>
    <location>
        <position position="546"/>
    </location>
</feature>
<feature type="mutagenesis site" description="No effect on stability. No effect on estrone-3 sulfate ATPase-coupled transmembrane transporter activity. No effect on substrate-induced ATP hydrolysis. No effect on substrate transport." evidence="33">
    <original>M</original>
    <variation>A</variation>
    <location>
        <position position="549"/>
    </location>
</feature>
<feature type="mutagenesis site" description="No effect on stability. Increased estrone-3 sulfate ATPase-coupled transmembrane transporter activity. Increased basal and substrate-induced ATP hydrolysis. Increased substrate transport." evidence="33">
    <original>L</original>
    <variation>A</variation>
    <location>
        <position position="554"/>
    </location>
</feature>
<feature type="mutagenesis site" description="Loss of protein expression." evidence="33">
    <original>L</original>
    <variation>A</variation>
    <location>
        <position position="555"/>
    </location>
</feature>
<feature type="mutagenesis site" description="No effect." evidence="15">
    <original>N</original>
    <variation>Q</variation>
    <location>
        <position position="557"/>
    </location>
</feature>
<feature type="mutagenesis site" description="Strongly reduced binding to hemin but not to PPIX." evidence="25">
    <original>H</original>
    <variation>A</variation>
    <location>
        <position position="583"/>
    </location>
</feature>
<feature type="mutagenesis site" description="Loss of glycosylation." evidence="15">
    <original>N</original>
    <variation>Q</variation>
    <location>
        <position position="596"/>
    </location>
</feature>
<feature type="mutagenesis site" description="Strongly reduced binding to hemin but not to PPIX." evidence="25">
    <original>C</original>
    <variation>A</variation>
    <location>
        <position position="603"/>
    </location>
</feature>
<feature type="mutagenesis site" description="No effect on hemin binding." evidence="25">
    <original>Y</original>
    <variation>A</variation>
    <location>
        <position position="605"/>
    </location>
</feature>
<feature type="sequence conflict" description="In Ref. 1; AAD09188 and 7; AAP44087." evidence="44" ref="1 7">
    <original>A</original>
    <variation>V</variation>
    <location>
        <position position="24"/>
    </location>
</feature>
<feature type="sequence conflict" description="In Ref. 10; BAA92050." evidence="44" ref="10">
    <location>
        <begin position="315"/>
        <end position="316"/>
    </location>
</feature>
<feature type="sequence conflict" description="In Ref. 13; AAH92408." evidence="44" ref="13">
    <original>G</original>
    <variation>V</variation>
    <location>
        <position position="390"/>
    </location>
</feature>
<feature type="sequence conflict" description="In Ref. 14; AF093771/AF093772." evidence="44" ref="14">
    <original>R</original>
    <variation>G</variation>
    <location>
        <position position="482"/>
    </location>
</feature>
<feature type="sequence conflict" description="In Ref. 2; AAC97367." evidence="44" ref="2">
    <original>R</original>
    <variation>T</variation>
    <location>
        <position position="482"/>
    </location>
</feature>
<feature type="sequence conflict" description="In Ref. 14; AF093772." evidence="44" ref="14">
    <original>LP</original>
    <variation>FT</variation>
    <location>
        <begin position="484"/>
        <end position="485"/>
    </location>
</feature>
<feature type="sequence conflict" description="In Ref. 6; AAG52982." evidence="44" ref="6">
    <original>P</original>
    <variation>A</variation>
    <location>
        <position position="501"/>
    </location>
</feature>
<feature type="strand" evidence="59">
    <location>
        <begin position="37"/>
        <end position="45"/>
    </location>
</feature>
<feature type="strand" evidence="59">
    <location>
        <begin position="62"/>
        <end position="71"/>
    </location>
</feature>
<feature type="strand" evidence="59">
    <location>
        <begin position="73"/>
        <end position="79"/>
    </location>
</feature>
<feature type="turn" evidence="59">
    <location>
        <begin position="82"/>
        <end position="84"/>
    </location>
</feature>
<feature type="helix" evidence="59">
    <location>
        <begin position="86"/>
        <end position="94"/>
    </location>
</feature>
<feature type="turn" evidence="59">
    <location>
        <begin position="99"/>
        <end position="101"/>
    </location>
</feature>
<feature type="strand" evidence="59">
    <location>
        <begin position="104"/>
        <end position="108"/>
    </location>
</feature>
<feature type="helix" evidence="59">
    <location>
        <begin position="117"/>
        <end position="120"/>
    </location>
</feature>
<feature type="strand" evidence="59">
    <location>
        <begin position="121"/>
        <end position="124"/>
    </location>
</feature>
<feature type="strand" evidence="58">
    <location>
        <begin position="132"/>
        <end position="135"/>
    </location>
</feature>
<feature type="helix" evidence="59">
    <location>
        <begin position="136"/>
        <end position="147"/>
    </location>
</feature>
<feature type="strand" evidence="58">
    <location>
        <begin position="150"/>
        <end position="152"/>
    </location>
</feature>
<feature type="helix" evidence="59">
    <location>
        <begin position="154"/>
        <end position="168"/>
    </location>
</feature>
<feature type="helix" evidence="59">
    <location>
        <begin position="171"/>
        <end position="173"/>
    </location>
</feature>
<feature type="strand" evidence="56">
    <location>
        <begin position="174"/>
        <end position="177"/>
    </location>
</feature>
<feature type="strand" evidence="59">
    <location>
        <begin position="181"/>
        <end position="183"/>
    </location>
</feature>
<feature type="helix" evidence="59">
    <location>
        <begin position="188"/>
        <end position="200"/>
    </location>
</feature>
<feature type="strand" evidence="59">
    <location>
        <begin position="205"/>
        <end position="211"/>
    </location>
</feature>
<feature type="turn" evidence="59">
    <location>
        <begin position="212"/>
        <end position="215"/>
    </location>
</feature>
<feature type="helix" evidence="59">
    <location>
        <begin position="218"/>
        <end position="233"/>
    </location>
</feature>
<feature type="strand" evidence="59">
    <location>
        <begin position="237"/>
        <end position="241"/>
    </location>
</feature>
<feature type="helix" evidence="59">
    <location>
        <begin position="247"/>
        <end position="250"/>
    </location>
</feature>
<feature type="strand" evidence="59">
    <location>
        <begin position="254"/>
        <end position="260"/>
    </location>
</feature>
<feature type="strand" evidence="59">
    <location>
        <begin position="263"/>
        <end position="268"/>
    </location>
</feature>
<feature type="helix" evidence="59">
    <location>
        <begin position="270"/>
        <end position="272"/>
    </location>
</feature>
<feature type="helix" evidence="59">
    <location>
        <begin position="273"/>
        <end position="280"/>
    </location>
</feature>
<feature type="strand" evidence="56">
    <location>
        <begin position="286"/>
        <end position="288"/>
    </location>
</feature>
<feature type="helix" evidence="59">
    <location>
        <begin position="290"/>
        <end position="299"/>
    </location>
</feature>
<feature type="helix" evidence="54">
    <location>
        <begin position="303"/>
        <end position="307"/>
    </location>
</feature>
<feature type="helix" evidence="59">
    <location>
        <begin position="329"/>
        <end position="337"/>
    </location>
</feature>
<feature type="helix" evidence="59">
    <location>
        <begin position="340"/>
        <end position="352"/>
    </location>
</feature>
<feature type="helix" evidence="59">
    <location>
        <begin position="373"/>
        <end position="390"/>
    </location>
</feature>
<feature type="helix" evidence="59">
    <location>
        <begin position="393"/>
        <end position="412"/>
    </location>
</feature>
<feature type="turn" evidence="57">
    <location>
        <begin position="413"/>
        <end position="415"/>
    </location>
</feature>
<feature type="strand" evidence="55">
    <location>
        <begin position="418"/>
        <end position="421"/>
    </location>
</feature>
<feature type="helix" evidence="59">
    <location>
        <begin position="422"/>
        <end position="439"/>
    </location>
</feature>
<feature type="helix" evidence="59">
    <location>
        <begin position="440"/>
        <end position="445"/>
    </location>
</feature>
<feature type="helix" evidence="59">
    <location>
        <begin position="446"/>
        <end position="449"/>
    </location>
</feature>
<feature type="helix" evidence="59">
    <location>
        <begin position="452"/>
        <end position="460"/>
    </location>
</feature>
<feature type="helix" evidence="59">
    <location>
        <begin position="466"/>
        <end position="476"/>
    </location>
</feature>
<feature type="helix" evidence="59">
    <location>
        <begin position="478"/>
        <end position="481"/>
    </location>
</feature>
<feature type="helix" evidence="59">
    <location>
        <begin position="484"/>
        <end position="497"/>
    </location>
</feature>
<feature type="helix" evidence="59">
    <location>
        <begin position="503"/>
        <end position="528"/>
    </location>
</feature>
<feature type="helix" evidence="59">
    <location>
        <begin position="535"/>
        <end position="550"/>
    </location>
</feature>
<feature type="strand" evidence="59">
    <location>
        <begin position="552"/>
        <end position="556"/>
    </location>
</feature>
<feature type="helix" evidence="59">
    <location>
        <begin position="558"/>
        <end position="560"/>
    </location>
</feature>
<feature type="helix" evidence="59">
    <location>
        <begin position="563"/>
        <end position="566"/>
    </location>
</feature>
<feature type="helix" evidence="59">
    <location>
        <begin position="567"/>
        <end position="571"/>
    </location>
</feature>
<feature type="helix" evidence="59">
    <location>
        <begin position="573"/>
        <end position="586"/>
    </location>
</feature>
<feature type="turn" evidence="59">
    <location>
        <begin position="597"/>
        <end position="599"/>
    </location>
</feature>
<feature type="strand" evidence="58">
    <location>
        <begin position="602"/>
        <end position="605"/>
    </location>
</feature>
<feature type="helix" evidence="59">
    <location>
        <begin position="610"/>
        <end position="616"/>
    </location>
</feature>
<feature type="helix" evidence="59">
    <location>
        <begin position="624"/>
        <end position="649"/>
    </location>
</feature>
<reference key="1">
    <citation type="journal article" date="1998" name="Cancer Res.">
        <title>A human placenta-specific ATP-binding cassette gene (ABCP) on chromosome 4q22 that is involved in multidrug resistance.</title>
        <authorList>
            <person name="Allikmets R."/>
            <person name="Schriml L.M."/>
            <person name="Hutchinson A."/>
            <person name="Romano-Spica V."/>
            <person name="Dean M."/>
        </authorList>
    </citation>
    <scope>NUCLEOTIDE SEQUENCE [MRNA] (ISOFORM 1)</scope>
    <scope>VARIANTS GLU-166 AND SER-208</scope>
    <scope>TISSUE SPECIFICITY</scope>
    <source>
        <tissue>Placenta</tissue>
    </source>
</reference>
<reference key="2">
    <citation type="journal article" date="1998" name="Proc. Natl. Acad. Sci. U.S.A.">
        <title>A multidrug resistance transporter from human MCF-7 breast cancer cells.</title>
        <authorList>
            <person name="Doyle L.A."/>
            <person name="Yang W."/>
            <person name="Abruzzo L.V."/>
            <person name="Krogmann T."/>
            <person name="Gao Y."/>
            <person name="Rishi A.K."/>
            <person name="Ross D.D."/>
        </authorList>
    </citation>
    <scope>NUCLEOTIDE SEQUENCE [MRNA] (ISOFORM 1)</scope>
    <scope>TISSUE SPECIFICITY</scope>
    <source>
        <tissue>Mammary cancer</tissue>
    </source>
</reference>
<reference key="3">
    <citation type="journal article" date="1999" name="Proc. Natl. Acad. Sci. U.S.A.">
        <authorList>
            <person name="Doyle L.A."/>
            <person name="Yang W."/>
            <person name="Abruzzo L.V."/>
            <person name="Krogmann T."/>
            <person name="Gao Y."/>
            <person name="Rishi A.K."/>
            <person name="Ross D.D."/>
        </authorList>
    </citation>
    <scope>ERRATUM OF PUBMED:9861027</scope>
</reference>
<reference key="4">
    <citation type="submission" date="2001-03" db="EMBL/GenBank/DDBJ databases">
        <title>Breast cancer resistance protein constitutes a 140-kDa complex as a homodimer.</title>
        <authorList>
            <person name="Kage K."/>
            <person name="Tsukahara S."/>
            <person name="Sugiyama T."/>
            <person name="Asada S."/>
            <person name="Ishikawa E."/>
            <person name="Tsuruo T."/>
            <person name="Sugimoto Y."/>
        </authorList>
    </citation>
    <scope>NUCLEOTIDE SEQUENCE [MRNA] (ISOFORM 1)</scope>
</reference>
<reference key="5">
    <citation type="journal article" date="2001" name="Cancer Res.">
        <title>Identification of breast cancer resistant protein/mitoxantrone resistance/placenta-specific, ATP-binding cassette transporter as a transporter of NB-506 and J-107088, topoisomerase I inhibitors with an indolocarbazole structure.</title>
        <authorList>
            <person name="Komatani H."/>
            <person name="Kotani H."/>
            <person name="Hara Y."/>
            <person name="Nakagawa R."/>
            <person name="Matsumoto M."/>
            <person name="Arakawa H."/>
            <person name="Nishimura S."/>
        </authorList>
    </citation>
    <scope>NUCLEOTIDE SEQUENCE [MRNA] (ISOFORM 1)</scope>
    <scope>FUNCTION</scope>
    <scope>CATALYTIC ACTIVITY</scope>
</reference>
<reference key="6">
    <citation type="journal article" date="2001" name="Nat. Med.">
        <title>The ABC transporter Bcrp1/ABCG2 is expressed in a wide variety of stem cells and is a molecular determinant of the side-population phenotype.</title>
        <authorList>
            <person name="Zhou S."/>
            <person name="Schuetz J.D."/>
            <person name="Bunting K.D."/>
            <person name="Colapietro A.M."/>
            <person name="Sampath J."/>
            <person name="Morris J.J."/>
            <person name="Lagutina I."/>
            <person name="Grosveld G.C."/>
            <person name="Osawa M."/>
            <person name="Nakauchi H."/>
            <person name="Sorrentino B.P."/>
        </authorList>
    </citation>
    <scope>NUCLEOTIDE SEQUENCE [MRNA] (ISOFORM 1)</scope>
</reference>
<reference key="7">
    <citation type="journal article" date="2003" name="FASEB J.">
        <title>The expression and functional characterization of ABCG2 in brain endothelial cells and vessels.</title>
        <authorList>
            <person name="Zhang W."/>
            <person name="Mojsilovic-Petrovic J."/>
            <person name="Andrade M.F."/>
            <person name="Zhang H."/>
            <person name="Ball M."/>
            <person name="Stanimirovic D.B."/>
        </authorList>
    </citation>
    <scope>NUCLEOTIDE SEQUENCE [MRNA] (ISOFORM 1)</scope>
    <scope>FUNCTION</scope>
    <scope>CATALYTIC ACTIVITY</scope>
    <scope>TISSUE SPECIFICITY</scope>
    <scope>VARIANTS GLU-166 AND SER-208</scope>
    <source>
        <tissue>Brain endothelium</tissue>
    </source>
</reference>
<reference key="8">
    <citation type="submission" date="2001-12" db="EMBL/GenBank/DDBJ databases">
        <authorList>
            <person name="Yoshikawa M."/>
            <person name="Yabuuchi H."/>
            <person name="Ikegami Y."/>
            <person name="Ishikawa T."/>
        </authorList>
    </citation>
    <scope>NUCLEOTIDE SEQUENCE [MRNA] (ISOFORM 1)</scope>
    <scope>VARIANT LYS-141</scope>
</reference>
<reference key="9">
    <citation type="submission" date="2003-06" db="EMBL/GenBank/DDBJ databases">
        <title>Cell line K562 resistant to Hoechst 33342.</title>
        <authorList>
            <person name="Sudarikov A."/>
            <person name="Makarik T."/>
            <person name="Andreeff M."/>
        </authorList>
    </citation>
    <scope>NUCLEOTIDE SEQUENCE [MRNA] (ISOFORM 1)</scope>
    <scope>VARIANT PRO-316</scope>
</reference>
<reference key="10">
    <citation type="journal article" date="2004" name="Nat. Genet.">
        <title>Complete sequencing and characterization of 21,243 full-length human cDNAs.</title>
        <authorList>
            <person name="Ota T."/>
            <person name="Suzuki Y."/>
            <person name="Nishikawa T."/>
            <person name="Otsuki T."/>
            <person name="Sugiyama T."/>
            <person name="Irie R."/>
            <person name="Wakamatsu A."/>
            <person name="Hayashi K."/>
            <person name="Sato H."/>
            <person name="Nagai K."/>
            <person name="Kimura K."/>
            <person name="Makita H."/>
            <person name="Sekine M."/>
            <person name="Obayashi M."/>
            <person name="Nishi T."/>
            <person name="Shibahara T."/>
            <person name="Tanaka T."/>
            <person name="Ishii S."/>
            <person name="Yamamoto J."/>
            <person name="Saito K."/>
            <person name="Kawai Y."/>
            <person name="Isono Y."/>
            <person name="Nakamura Y."/>
            <person name="Nagahari K."/>
            <person name="Murakami K."/>
            <person name="Yasuda T."/>
            <person name="Iwayanagi T."/>
            <person name="Wagatsuma M."/>
            <person name="Shiratori A."/>
            <person name="Sudo H."/>
            <person name="Hosoiri T."/>
            <person name="Kaku Y."/>
            <person name="Kodaira H."/>
            <person name="Kondo H."/>
            <person name="Sugawara M."/>
            <person name="Takahashi M."/>
            <person name="Kanda K."/>
            <person name="Yokoi T."/>
            <person name="Furuya T."/>
            <person name="Kikkawa E."/>
            <person name="Omura Y."/>
            <person name="Abe K."/>
            <person name="Kamihara K."/>
            <person name="Katsuta N."/>
            <person name="Sato K."/>
            <person name="Tanikawa M."/>
            <person name="Yamazaki M."/>
            <person name="Ninomiya K."/>
            <person name="Ishibashi T."/>
            <person name="Yamashita H."/>
            <person name="Murakawa K."/>
            <person name="Fujimori K."/>
            <person name="Tanai H."/>
            <person name="Kimata M."/>
            <person name="Watanabe M."/>
            <person name="Hiraoka S."/>
            <person name="Chiba Y."/>
            <person name="Ishida S."/>
            <person name="Ono Y."/>
            <person name="Takiguchi S."/>
            <person name="Watanabe S."/>
            <person name="Yosida M."/>
            <person name="Hotuta T."/>
            <person name="Kusano J."/>
            <person name="Kanehori K."/>
            <person name="Takahashi-Fujii A."/>
            <person name="Hara H."/>
            <person name="Tanase T.-O."/>
            <person name="Nomura Y."/>
            <person name="Togiya S."/>
            <person name="Komai F."/>
            <person name="Hara R."/>
            <person name="Takeuchi K."/>
            <person name="Arita M."/>
            <person name="Imose N."/>
            <person name="Musashino K."/>
            <person name="Yuuki H."/>
            <person name="Oshima A."/>
            <person name="Sasaki N."/>
            <person name="Aotsuka S."/>
            <person name="Yoshikawa Y."/>
            <person name="Matsunawa H."/>
            <person name="Ichihara T."/>
            <person name="Shiohata N."/>
            <person name="Sano S."/>
            <person name="Moriya S."/>
            <person name="Momiyama H."/>
            <person name="Satoh N."/>
            <person name="Takami S."/>
            <person name="Terashima Y."/>
            <person name="Suzuki O."/>
            <person name="Nakagawa S."/>
            <person name="Senoh A."/>
            <person name="Mizoguchi H."/>
            <person name="Goto Y."/>
            <person name="Shimizu F."/>
            <person name="Wakebe H."/>
            <person name="Hishigaki H."/>
            <person name="Watanabe T."/>
            <person name="Sugiyama A."/>
            <person name="Takemoto M."/>
            <person name="Kawakami B."/>
            <person name="Yamazaki M."/>
            <person name="Watanabe K."/>
            <person name="Kumagai A."/>
            <person name="Itakura S."/>
            <person name="Fukuzumi Y."/>
            <person name="Fujimori Y."/>
            <person name="Komiyama M."/>
            <person name="Tashiro H."/>
            <person name="Tanigami A."/>
            <person name="Fujiwara T."/>
            <person name="Ono T."/>
            <person name="Yamada K."/>
            <person name="Fujii Y."/>
            <person name="Ozaki K."/>
            <person name="Hirao M."/>
            <person name="Ohmori Y."/>
            <person name="Kawabata A."/>
            <person name="Hikiji T."/>
            <person name="Kobatake N."/>
            <person name="Inagaki H."/>
            <person name="Ikema Y."/>
            <person name="Okamoto S."/>
            <person name="Okitani R."/>
            <person name="Kawakami T."/>
            <person name="Noguchi S."/>
            <person name="Itoh T."/>
            <person name="Shigeta K."/>
            <person name="Senba T."/>
            <person name="Matsumura K."/>
            <person name="Nakajima Y."/>
            <person name="Mizuno T."/>
            <person name="Morinaga M."/>
            <person name="Sasaki M."/>
            <person name="Togashi T."/>
            <person name="Oyama M."/>
            <person name="Hata H."/>
            <person name="Watanabe M."/>
            <person name="Komatsu T."/>
            <person name="Mizushima-Sugano J."/>
            <person name="Satoh T."/>
            <person name="Shirai Y."/>
            <person name="Takahashi Y."/>
            <person name="Nakagawa K."/>
            <person name="Okumura K."/>
            <person name="Nagase T."/>
            <person name="Nomura N."/>
            <person name="Kikuchi H."/>
            <person name="Masuho Y."/>
            <person name="Yamashita R."/>
            <person name="Nakai K."/>
            <person name="Yada T."/>
            <person name="Nakamura Y."/>
            <person name="Ohara O."/>
            <person name="Isogai T."/>
            <person name="Sugano S."/>
        </authorList>
    </citation>
    <scope>NUCLEOTIDE SEQUENCE [LARGE SCALE MRNA] (ISOFORM 1)</scope>
    <source>
        <tissue>Hippocampus</tissue>
        <tissue>Placenta</tissue>
    </source>
</reference>
<reference key="11">
    <citation type="submission" date="2006-09" db="EMBL/GenBank/DDBJ databases">
        <authorList>
            <consortium name="SeattleSNPs variation discovery resource"/>
        </authorList>
    </citation>
    <scope>NUCLEOTIDE SEQUENCE [GENOMIC DNA]</scope>
    <scope>VARIANTS MET-12; LYS-141; HIS-296 AND THR-528</scope>
</reference>
<reference key="12">
    <citation type="journal article" date="2005" name="Nature">
        <title>Generation and annotation of the DNA sequences of human chromosomes 2 and 4.</title>
        <authorList>
            <person name="Hillier L.W."/>
            <person name="Graves T.A."/>
            <person name="Fulton R.S."/>
            <person name="Fulton L.A."/>
            <person name="Pepin K.H."/>
            <person name="Minx P."/>
            <person name="Wagner-McPherson C."/>
            <person name="Layman D."/>
            <person name="Wylie K."/>
            <person name="Sekhon M."/>
            <person name="Becker M.C."/>
            <person name="Fewell G.A."/>
            <person name="Delehaunty K.D."/>
            <person name="Miner T.L."/>
            <person name="Nash W.E."/>
            <person name="Kremitzki C."/>
            <person name="Oddy L."/>
            <person name="Du H."/>
            <person name="Sun H."/>
            <person name="Bradshaw-Cordum H."/>
            <person name="Ali J."/>
            <person name="Carter J."/>
            <person name="Cordes M."/>
            <person name="Harris A."/>
            <person name="Isak A."/>
            <person name="van Brunt A."/>
            <person name="Nguyen C."/>
            <person name="Du F."/>
            <person name="Courtney L."/>
            <person name="Kalicki J."/>
            <person name="Ozersky P."/>
            <person name="Abbott S."/>
            <person name="Armstrong J."/>
            <person name="Belter E.A."/>
            <person name="Caruso L."/>
            <person name="Cedroni M."/>
            <person name="Cotton M."/>
            <person name="Davidson T."/>
            <person name="Desai A."/>
            <person name="Elliott G."/>
            <person name="Erb T."/>
            <person name="Fronick C."/>
            <person name="Gaige T."/>
            <person name="Haakenson W."/>
            <person name="Haglund K."/>
            <person name="Holmes A."/>
            <person name="Harkins R."/>
            <person name="Kim K."/>
            <person name="Kruchowski S.S."/>
            <person name="Strong C.M."/>
            <person name="Grewal N."/>
            <person name="Goyea E."/>
            <person name="Hou S."/>
            <person name="Levy A."/>
            <person name="Martinka S."/>
            <person name="Mead K."/>
            <person name="McLellan M.D."/>
            <person name="Meyer R."/>
            <person name="Randall-Maher J."/>
            <person name="Tomlinson C."/>
            <person name="Dauphin-Kohlberg S."/>
            <person name="Kozlowicz-Reilly A."/>
            <person name="Shah N."/>
            <person name="Swearengen-Shahid S."/>
            <person name="Snider J."/>
            <person name="Strong J.T."/>
            <person name="Thompson J."/>
            <person name="Yoakum M."/>
            <person name="Leonard S."/>
            <person name="Pearman C."/>
            <person name="Trani L."/>
            <person name="Radionenko M."/>
            <person name="Waligorski J.E."/>
            <person name="Wang C."/>
            <person name="Rock S.M."/>
            <person name="Tin-Wollam A.-M."/>
            <person name="Maupin R."/>
            <person name="Latreille P."/>
            <person name="Wendl M.C."/>
            <person name="Yang S.-P."/>
            <person name="Pohl C."/>
            <person name="Wallis J.W."/>
            <person name="Spieth J."/>
            <person name="Bieri T.A."/>
            <person name="Berkowicz N."/>
            <person name="Nelson J.O."/>
            <person name="Osborne J."/>
            <person name="Ding L."/>
            <person name="Meyer R."/>
            <person name="Sabo A."/>
            <person name="Shotland Y."/>
            <person name="Sinha P."/>
            <person name="Wohldmann P.E."/>
            <person name="Cook L.L."/>
            <person name="Hickenbotham M.T."/>
            <person name="Eldred J."/>
            <person name="Williams D."/>
            <person name="Jones T.A."/>
            <person name="She X."/>
            <person name="Ciccarelli F.D."/>
            <person name="Izaurralde E."/>
            <person name="Taylor J."/>
            <person name="Schmutz J."/>
            <person name="Myers R.M."/>
            <person name="Cox D.R."/>
            <person name="Huang X."/>
            <person name="McPherson J.D."/>
            <person name="Mardis E.R."/>
            <person name="Clifton S.W."/>
            <person name="Warren W.C."/>
            <person name="Chinwalla A.T."/>
            <person name="Eddy S.R."/>
            <person name="Marra M.A."/>
            <person name="Ovcharenko I."/>
            <person name="Furey T.S."/>
            <person name="Miller W."/>
            <person name="Eichler E.E."/>
            <person name="Bork P."/>
            <person name="Suyama M."/>
            <person name="Torrents D."/>
            <person name="Waterston R.H."/>
            <person name="Wilson R.K."/>
        </authorList>
    </citation>
    <scope>NUCLEOTIDE SEQUENCE [LARGE SCALE GENOMIC DNA]</scope>
</reference>
<reference key="13">
    <citation type="journal article" date="2004" name="Genome Res.">
        <title>The status, quality, and expansion of the NIH full-length cDNA project: the Mammalian Gene Collection (MGC).</title>
        <authorList>
            <consortium name="The MGC Project Team"/>
        </authorList>
    </citation>
    <scope>NUCLEOTIDE SEQUENCE [LARGE SCALE MRNA] (ISOFORMS 1 AND 2)</scope>
    <scope>VARIANT LYS-141</scope>
    <source>
        <tissue>Pancreas</tissue>
        <tissue>PNS</tissue>
    </source>
</reference>
<reference key="14">
    <citation type="journal article" date="1999" name="Cancer Res.">
        <title>Molecular cloning of cDNAs which are highly overexpressed in mitoxantrone-resistant cells: demonstration of homology to ABC transport genes.</title>
        <authorList>
            <person name="Miyake K."/>
            <person name="Mickley L."/>
            <person name="Litman T."/>
            <person name="Zhan Z."/>
            <person name="Robey R.W."/>
            <person name="Cristensen B."/>
            <person name="Brangi M."/>
            <person name="Greenberger L."/>
            <person name="Dean M."/>
            <person name="Fojo T."/>
            <person name="Bates S.E."/>
        </authorList>
    </citation>
    <scope>NUCLEOTIDE SEQUENCE [MRNA] OF 294-655 (ISOFORM 1)</scope>
</reference>
<reference key="15">
    <citation type="journal article" date="2002" name="Mol. Cancer Ther.">
        <title>Potent and specific inhibition of the breast cancer resistance protein multidrug transporter in vitro and in mouse intestine by a novel analogue of fumitremorgin C.</title>
        <authorList>
            <person name="Allen J.D."/>
            <person name="van Loevezijn A."/>
            <person name="Lakhai J.M."/>
            <person name="van der Valk M."/>
            <person name="van Tellingen O."/>
            <person name="Reid G."/>
            <person name="Schellens J.H."/>
            <person name="Koomen G.J."/>
            <person name="Schinkel A.H."/>
        </authorList>
    </citation>
    <scope>FUNCTION</scope>
    <scope>CATALYTIC ACTIVITY</scope>
    <scope>ACTIVITY REGULATION</scope>
</reference>
<reference key="16">
    <citation type="journal article" date="2003" name="J. Biol. Chem.">
        <title>ABCG2 transports sulfated conjugates of steroids and xenobiotics.</title>
        <authorList>
            <person name="Suzuki M."/>
            <person name="Suzuki H."/>
            <person name="Sugimoto Y."/>
            <person name="Sugiyama Y."/>
        </authorList>
    </citation>
    <scope>FUNCTION</scope>
    <scope>CATALYTIC ACTIVITY</scope>
    <scope>BIOPHYSICOCHEMICAL PROPERTIES</scope>
</reference>
<reference key="17">
    <citation type="journal article" date="2004" name="J. Biol. Chem.">
        <title>Characterization of oligomeric human half-ABC transporter ATP-binding cassette G2.</title>
        <authorList>
            <person name="Xu J."/>
            <person name="Liu Y."/>
            <person name="Yang Y."/>
            <person name="Bates S."/>
            <person name="Zhang J.T."/>
        </authorList>
    </citation>
    <scope>SUBUNIT</scope>
    <scope>SUBCELLULAR LOCATION</scope>
</reference>
<reference key="18">
    <citation type="journal article" date="2005" name="Biochemistry">
        <title>N-linked glycosylation of the human ABC transporter ABCG2 on asparagine 596 is not essential for expression, transport activity, or trafficking to the plasma membrane.</title>
        <authorList>
            <person name="Diop N.K."/>
            <person name="Hrycyna C.A."/>
        </authorList>
    </citation>
    <scope>SUBCELLULAR LOCATION</scope>
    <scope>GLYCOSYLATION AT ASN-596</scope>
    <scope>LACK OF GLYCOSYLATION AT ASN-418 AND ASN-557</scope>
    <scope>MUTAGENESIS OF ASN-418; ASN-557 AND ASN-596</scope>
</reference>
<reference key="19">
    <citation type="journal article" date="2005" name="Biochim. Biophys. Acta">
        <title>Single amino acid (482) variants of the ABCG2 multidrug transporter: major differences in transport capacity and substrate recognition.</title>
        <authorList>
            <person name="Oezvegy-Laczka C."/>
            <person name="Koebloes G."/>
            <person name="Sarkadi B."/>
            <person name="Varadi A."/>
        </authorList>
    </citation>
    <scope>FUNCTION</scope>
    <scope>MUTAGENESIS OF ARG-482</scope>
</reference>
<reference key="20">
    <citation type="journal article" date="2005" name="J. Cell Sci.">
        <title>Effect of Walker A mutation (K86M) on oligomerization and surface targeting of the multidrug resistance transporter ABCG2.</title>
        <authorList>
            <person name="Henriksen U."/>
            <person name="Gether U."/>
            <person name="Litman T."/>
        </authorList>
    </citation>
    <scope>MUTAGENESIS OF LYS-86</scope>
    <scope>SUBCELLULAR LOCATION</scope>
    <scope>HOMODIMERIZATION</scope>
</reference>
<reference key="21">
    <citation type="journal article" date="2007" name="J. Biol. Chem.">
        <title>Intramolecular disulfide bond is a critical check point determining degradative fates of ATP-binding cassette (ABC) transporter ABCG2 protein.</title>
        <authorList>
            <person name="Wakabayashi K."/>
            <person name="Nakagawa H."/>
            <person name="Tamura A."/>
            <person name="Koshiba S."/>
            <person name="Hoshijima K."/>
            <person name="Komada M."/>
            <person name="Ishikawa T."/>
        </authorList>
    </citation>
    <scope>SUBUNIT</scope>
    <scope>DISULFIDE BONDS</scope>
</reference>
<reference key="22">
    <citation type="journal article" date="2008" name="J. Biol. Chem.">
        <title>The 44-kDa Pim-1 kinase phosphorylates BCRP/ABCG2 and thereby promotes its multimerization and drug-resistant activity in human prostate cancer cells.</title>
        <authorList>
            <person name="Xie Y."/>
            <person name="Xu K."/>
            <person name="Linn D.E."/>
            <person name="Yang X."/>
            <person name="Guo Z."/>
            <person name="Shimelis H."/>
            <person name="Nakanishi T."/>
            <person name="Ross D.D."/>
            <person name="Chen H."/>
            <person name="Fazli L."/>
            <person name="Gleave M.E."/>
            <person name="Qiu Y."/>
        </authorList>
    </citation>
    <scope>FUNCTION</scope>
    <scope>SUBCELLULAR LOCATION</scope>
    <scope>SUBUNIT</scope>
    <scope>PHOSPHORYLATION AT THR-362</scope>
    <scope>MUTAGENESIS OF THR-362</scope>
</reference>
<reference key="23">
    <citation type="journal article" date="2008" name="Lancet">
        <title>Association of three genetic loci with uric acid concentration and risk of gout: a genome-wide association study.</title>
        <authorList>
            <person name="Dehghan A."/>
            <person name="Kottgen A."/>
            <person name="Yang Q."/>
            <person name="Hwang S.J."/>
            <person name="Kao W.L."/>
            <person name="Rivadeneira F."/>
            <person name="Boerwinkle E."/>
            <person name="Levy D."/>
            <person name="Hofman A."/>
            <person name="Astor B.C."/>
            <person name="Benjamin E.J."/>
            <person name="van Duijn C.M."/>
            <person name="Witteman J.C."/>
            <person name="Coresh J."/>
            <person name="Fox C.S."/>
        </authorList>
    </citation>
    <scope>POLYMORPHISM</scope>
    <scope>INVOLVEMENT IN UAQTL1 AND GOUT</scope>
</reference>
<reference key="24">
    <citation type="journal article" date="2009" name="Proc. Natl. Acad. Sci. U.S.A.">
        <title>Identification of a urate transporter, ABCG2, with a common functional polymorphism causing gout.</title>
        <authorList>
            <person name="Woodward O.M."/>
            <person name="Kottgen A."/>
            <person name="Coresh J."/>
            <person name="Boerwinkle E."/>
            <person name="Guggino W.B."/>
            <person name="Kottgen M."/>
        </authorList>
    </citation>
    <scope>POLYMORPHISM</scope>
    <scope>INVOLVEMENT IN UAQTL1</scope>
    <scope>ASSOCIATION OF VARIANT LYS-141 WITH GOUT</scope>
    <scope>CHARACTERIZATION OF VARIANT LYS-141</scope>
    <scope>FUNCTION</scope>
    <scope>CATALYTIC ACTIVITY</scope>
    <scope>SUBCELLULAR LOCATION</scope>
</reference>
<reference key="25">
    <citation type="journal article" date="2009" name="Sci. Transl. Med.">
        <title>Common defects of ABCG2, a high-capacity urate exporter, cause gout: a function-based genetic analysis in a Japanese population.</title>
        <authorList>
            <person name="Matsuo H."/>
            <person name="Takada T."/>
            <person name="Ichida K."/>
            <person name="Nakamura T."/>
            <person name="Nakayama A."/>
            <person name="Ikebuchi Y."/>
            <person name="Ito K."/>
            <person name="Kusanagi Y."/>
            <person name="Chiba T."/>
            <person name="Tadokoro S."/>
            <person name="Takada Y."/>
            <person name="Oikawa Y."/>
            <person name="Inoue H."/>
            <person name="Suzuki K."/>
            <person name="Okada R."/>
            <person name="Nishiyama J."/>
            <person name="Domoto H."/>
            <person name="Watanabe S."/>
            <person name="Fujita M."/>
            <person name="Morimoto Y."/>
            <person name="Naito M."/>
            <person name="Nishio K."/>
            <person name="Hishida A."/>
            <person name="Wakai K."/>
            <person name="Asai Y."/>
            <person name="Niwa K."/>
            <person name="Kamakura K."/>
            <person name="Nonoyama S."/>
            <person name="Sakurai Y."/>
            <person name="Hosoya T."/>
            <person name="Kanai Y."/>
            <person name="Suzuki H."/>
            <person name="Hamajima N."/>
            <person name="Shinomiya N."/>
        </authorList>
    </citation>
    <scope>FUNCTION</scope>
    <scope>CATALYTIC ACTIVITY</scope>
    <scope>POLYMORPHISM</scope>
    <scope>INVOLVEMENT IN UAQTL1</scope>
    <scope>ASSOCIATION OF VARIANT LYS-141 WITH GOUT</scope>
</reference>
<reference key="26">
    <citation type="journal article" date="2010" name="J. Biol. Chem.">
        <title>Estradiol induces export of sphingosine 1-phosphate from breast cancer cells via ABCC1 and ABCG2.</title>
        <authorList>
            <person name="Takabe K."/>
            <person name="Kim R.H."/>
            <person name="Allegood J.C."/>
            <person name="Mitra P."/>
            <person name="Ramachandran S."/>
            <person name="Nagahashi M."/>
            <person name="Harikumar K.B."/>
            <person name="Hait N.C."/>
            <person name="Milstien S."/>
            <person name="Spiegel S."/>
        </authorList>
    </citation>
    <scope>FUNCTION</scope>
    <scope>CATALYTIC ACTIVITY</scope>
</reference>
<reference key="27">
    <citation type="journal article" date="2010" name="J. Biol. Chem.">
        <title>Glutathione transport is a unique function of the ATP-binding cassette protein ABCG2.</title>
        <authorList>
            <person name="Brechbuhl H.M."/>
            <person name="Gould N."/>
            <person name="Kachadourian R."/>
            <person name="Riekhof W.R."/>
            <person name="Voelker D.R."/>
            <person name="Day B.J."/>
        </authorList>
    </citation>
    <scope>CAUTION</scope>
</reference>
<reference key="28">
    <citation type="journal article" date="2010" name="J. Biol. Chem.">
        <title>ABCG2 transports and transfers heme to albumin through its large extracellular loop.</title>
        <authorList>
            <person name="Desuzinges-Mandon E."/>
            <person name="Arnaud O."/>
            <person name="Martinez L."/>
            <person name="Huche F."/>
            <person name="Di Pietro A."/>
            <person name="Falson P."/>
        </authorList>
    </citation>
    <scope>FUNCTION</scope>
    <scope>DOMAIN</scope>
    <scope>MUTAGENESIS OF HIS-583; CYS-603 AND TYR-605</scope>
</reference>
<reference key="29">
    <citation type="journal article" date="2011" name="Nucleosides Nucleotides Nucleic Acids">
        <title>ABCG2 is a high-capacity urate transporter and its genetic impairment increases serum uric acid levels in humans.</title>
        <authorList>
            <person name="Nakayama A."/>
            <person name="Matsuo H."/>
            <person name="Takada T."/>
            <person name="Ichida K."/>
            <person name="Nakamura T."/>
            <person name="Ikebuchi Y."/>
            <person name="Ito K."/>
            <person name="Hosoya T."/>
            <person name="Kanai Y."/>
            <person name="Suzuki H."/>
            <person name="Shinomiya N."/>
        </authorList>
    </citation>
    <scope>FUNCTION</scope>
    <scope>CATALYTIC ACTIVITY</scope>
    <scope>BIOPHYSICOCHEMICAL PROPERTIES</scope>
</reference>
<reference key="30">
    <citation type="journal article" date="2012" name="Nat. Genet.">
        <title>ABCG2 null alleles define the Jr(a-) blood group phenotype.</title>
        <authorList>
            <person name="Zelinski T."/>
            <person name="Coghlan G."/>
            <person name="Liu X.Q."/>
            <person name="Reid M.E."/>
        </authorList>
    </citation>
    <scope>POLYMORPHISM</scope>
    <scope>INVOLVEMENT IN JR</scope>
    <scope>VARIANT MET-12</scope>
</reference>
<reference key="31">
    <citation type="journal article" date="2012" name="Nat. Genet.">
        <title>Null alleles of ABCG2 encoding the breast cancer resistance protein define the new blood group system Junior.</title>
        <authorList>
            <person name="Saison C."/>
            <person name="Helias V."/>
            <person name="Ballif B.A."/>
            <person name="Peyrard T."/>
            <person name="Puy H."/>
            <person name="Miyazaki T."/>
            <person name="Perrot S."/>
            <person name="Vayssier-Taussat M."/>
            <person name="Waldner M."/>
            <person name="Le Pennec P.Y."/>
            <person name="Cartron J.P."/>
            <person name="Arnaud L."/>
        </authorList>
    </citation>
    <scope>POLYMORPHISM</scope>
    <scope>INVOLVEMENT IN JR</scope>
</reference>
<reference key="32">
    <citation type="journal article" date="2012" name="PLoS ONE">
        <title>Mitochondrial localization of ABC transporter ABCG2 and its function in 5-aminolevulinic acid-mediated protoporphyrin IX accumulation.</title>
        <authorList>
            <person name="Kobuchi H."/>
            <person name="Moriya K."/>
            <person name="Ogino T."/>
            <person name="Fujita H."/>
            <person name="Inoue K."/>
            <person name="Shuin T."/>
            <person name="Yasuda T."/>
            <person name="Utsumi K."/>
            <person name="Utsumi T."/>
        </authorList>
    </citation>
    <scope>FUNCTION</scope>
    <scope>SUBCELLULAR LOCATION</scope>
    <scope>GLYCOSYLATION</scope>
</reference>
<reference key="33">
    <citation type="journal article" date="2013" name="Front. Pharmacol.">
        <title>ABCG2 is not able to catalyze glutathione efflux and does not contribute to GSH-dependent collateral sensitivity.</title>
        <authorList>
            <person name="Gauthier C."/>
            <person name="Ozvegy-Laczka C."/>
            <person name="Szakacs G."/>
            <person name="Sarkadi B."/>
            <person name="Di Pietro A."/>
        </authorList>
    </citation>
    <scope>CAUTION</scope>
</reference>
<reference key="34">
    <citation type="journal article" date="2017" name="Placenta">
        <title>Localization of the placental BCRP/ABCG2 transporter to lipid rafts: Role for cholesterol in mediating efflux activity.</title>
        <authorList>
            <person name="Szilagyi J.T."/>
            <person name="Vetrano A.M."/>
            <person name="Laskin J.D."/>
            <person name="Aleksunes L.M."/>
        </authorList>
    </citation>
    <scope>SUBCELLULAR LOCATION</scope>
</reference>
<reference key="35">
    <citation type="journal article" date="2020" name="Cell. Mol. Life Sci.">
        <title>Cellular expression and function of naturally occurring variants of the human ABCG2 multidrug transporter.</title>
        <authorList>
            <person name="Zambo B."/>
            <person name="Mozner O."/>
            <person name="Bartos Z."/>
            <person name="Toeroek G."/>
            <person name="Varady G."/>
            <person name="Telbisz A."/>
            <person name="Homolya L."/>
            <person name="Orban T.I."/>
            <person name="Sarkadi B."/>
        </authorList>
    </citation>
    <scope>FUNCTION</scope>
    <scope>CATALYTIC ACTIVITY</scope>
    <scope>SUBCELLULAR LOCATION</scope>
    <scope>CHARACTERIZATION OF VARIANT LYS-141; TRP-147; MET-153; LYS-360 DEL; CYS-373; MET-434 AND PRO-476</scope>
    <scope>MUTAGENESIS OF MET-71; LYS-86 AND ARG-383</scope>
</reference>
<reference key="36">
    <citation type="journal article" date="2023" name="Pflugers Arch.">
        <title>Vitamin C transporter SVCT1 serves a physiological role as a urate importer: functional analyses and in vivo investigations.</title>
        <authorList>
            <person name="Toyoda Y."/>
            <person name="Miyata H."/>
            <person name="Uchida N."/>
            <person name="Morimoto K."/>
            <person name="Shigesawa R."/>
            <person name="Kassai H."/>
            <person name="Nakao K."/>
            <person name="Tomioka N.H."/>
            <person name="Matsuo H."/>
            <person name="Ichida K."/>
            <person name="Hosoyamada M."/>
            <person name="Aiba A."/>
            <person name="Suzuki H."/>
            <person name="Takada T."/>
        </authorList>
    </citation>
    <scope>FUNCTION</scope>
    <scope>TRANSPORTER ACTIVITY</scope>
</reference>
<reference key="37">
    <citation type="journal article" date="2024" name="Cell Metab.">
        <title>ABCG2 is an itaconate exporter that limits antibacterial innate immunity by alleviating TFEB-dependent lysosomal biogenesis.</title>
        <authorList>
            <person name="Chen C."/>
            <person name="Zhang Z."/>
            <person name="Liu C."/>
            <person name="Sun P."/>
            <person name="Liu P."/>
            <person name="Li X."/>
        </authorList>
    </citation>
    <scope>FUNCTION</scope>
    <scope>TRANSPORTER ACTIVITY</scope>
    <scope>MUTAGENESIS OF GLU-211</scope>
</reference>
<reference key="38">
    <citation type="journal article" date="2017" name="Nature">
        <title>Structure of the human multidrug transporter ABCG2.</title>
        <authorList>
            <person name="Taylor N.M.I."/>
            <person name="Manolaridis I."/>
            <person name="Jackson S.M."/>
            <person name="Kowal J."/>
            <person name="Stahlberg H."/>
            <person name="Locher K.P."/>
        </authorList>
    </citation>
    <scope>STRUCTURE BY ELECTRON MICROSCOPY (3.78 ANGSTROMS) OF 2-655</scope>
    <scope>FUNCTION</scope>
    <scope>CATALYTIC ACTIVITY</scope>
    <scope>SUBUNIT</scope>
    <scope>DISULFIDE BOND</scope>
    <scope>GLYCOSYLATION AT ASN-596</scope>
    <scope>MUTAGENESIS OF GLU-211</scope>
</reference>
<reference key="39">
    <citation type="journal article" date="2018" name="Nat. Struct. Mol. Biol.">
        <title>Structural basis of small-molecule inhibition of human multidrug transporter ABCG2.</title>
        <authorList>
            <person name="Jackson S.M."/>
            <person name="Manolaridis I."/>
            <person name="Kowal J."/>
            <person name="Zechner M."/>
            <person name="Taylor N.M.I."/>
            <person name="Bause M."/>
            <person name="Bauer S."/>
            <person name="Bartholomaeus R."/>
            <person name="Bernhardt G."/>
            <person name="Koenig B."/>
            <person name="Buschauer A."/>
            <person name="Stahlberg H."/>
            <person name="Altmann K.H."/>
            <person name="Locher K.P."/>
        </authorList>
    </citation>
    <scope>STRUCTURE BY ELECTRON MICROSCOPY (3.10 ANGSTROMS) IN COMPLEX WITH INHIBITORS</scope>
</reference>
<reference key="40">
    <citation type="journal article" date="2018" name="Nature">
        <title>Cryo-EM structures of a human ABCG2 mutant trapped in ATP-bound and substrate-bound states.</title>
        <authorList>
            <person name="Manolaridis I."/>
            <person name="Jackson S.M."/>
            <person name="Taylor N.M.I."/>
            <person name="Kowal J."/>
            <person name="Stahlberg H."/>
            <person name="Locher K.P."/>
        </authorList>
    </citation>
    <scope>STRUCTURE BY ELECTRON MICROSCOPY (3.09 ANGSTROMS) OF MUTANT GLN-211 IN COMPLEX WITH ATP</scope>
    <scope>MUTAGENESIS OF GLU-211; THR-435; ASN-436; PHE-439; VAL-546; MET-549; LEU-554 AND LEU-555</scope>
    <scope>FUNCTION</scope>
    <scope>CATALYTIC ACTIVITY</scope>
</reference>
<reference key="41">
    <citation type="journal article" date="2002" name="J. Hum. Genet.">
        <title>Catalog of 605 single-nucleotide polymorphisms (SNPs) among 13 genes encoding human ATP-binding cassette transporters: ABCA4, ABCA7, ABCA8, ABCD1, ABCD3, ABCD4, ABCE1, ABCF1, ABCG1, ABCG2, ABCG4, ABCG5, and ABCG8.</title>
        <authorList>
            <person name="Iida A."/>
            <person name="Saito S."/>
            <person name="Sekine A."/>
            <person name="Mishima C."/>
            <person name="Kitamura Y."/>
            <person name="Kondo K."/>
            <person name="Harigae S."/>
            <person name="Osawa S."/>
            <person name="Nakamura Y."/>
        </authorList>
    </citation>
    <scope>VARIANTS MET-12 AND LYS-141</scope>
</reference>
<reference key="42">
    <citation type="journal article" date="2003" name="Drug Metab. Pharmacokinet.">
        <title>Eight novel single nucleotide polymorphisms in ABCG2/BCRP in Japanese cancer patients administered irinotacan.</title>
        <authorList>
            <person name="Itoda M."/>
            <person name="Saito Y."/>
            <person name="Shirao K."/>
            <person name="Minami H."/>
            <person name="Ohtsu A."/>
            <person name="Yoshida T."/>
            <person name="Saijo N."/>
            <person name="Suzuki H."/>
            <person name="Sugiyama Y."/>
            <person name="Ozawa S."/>
            <person name="Sawada J."/>
        </authorList>
    </citation>
    <scope>VARIANTS LEU-431 AND LEU-489</scope>
</reference>
<reference key="43">
    <citation type="journal article" date="2003" name="Pharmacogenetics">
        <title>Natural allelic variants of breast cancer resistance protein (BCRP) and their relationship to BCRP expression in human intestine.</title>
        <authorList>
            <person name="Zamber C.P."/>
            <person name="Lamba J.K."/>
            <person name="Yasuda K."/>
            <person name="Farnum J."/>
            <person name="Thummel K."/>
            <person name="Schuetz J.D."/>
            <person name="Schuetz E.G."/>
        </authorList>
    </citation>
    <scope>VARIANTS MET-12; LYS-141; LEU-206 AND TYR-590</scope>
</reference>
<reference key="44">
    <citation type="journal article" date="2005" name="Cancer Chemother. Pharmacol.">
        <title>Single nucleotide polymorphisms modify the transporter activity of ABCG2.</title>
        <authorList>
            <person name="Morisaki K."/>
            <person name="Robey R.W."/>
            <person name="Oezvegy-Laczka C."/>
            <person name="Honjo Y."/>
            <person name="Polgar O."/>
            <person name="Steadman K."/>
            <person name="Sarkadi B."/>
            <person name="Bates S.E."/>
        </authorList>
    </citation>
    <scope>CHARACTERIZATION OF VARIANTS MET-12; LYS-141 AND ASN-620</scope>
</reference>
<reference key="45">
    <citation type="journal article" date="2006" name="Drug Metab. Pharmacokinet.">
        <title>Genetic variation and haplotype structure of the ABC transporter gene ABCG2 in a Japanese population.</title>
        <authorList>
            <person name="Maekawa K."/>
            <person name="Itoda M."/>
            <person name="Sai K."/>
            <person name="Saito Y."/>
            <person name="Kaniwa N."/>
            <person name="Shirao K."/>
            <person name="Hamaguchi T."/>
            <person name="Kunitoh H."/>
            <person name="Yamamoto N."/>
            <person name="Tamura T."/>
            <person name="Minami H."/>
            <person name="Kubota K."/>
            <person name="Ohtsu A."/>
            <person name="Yoshida T."/>
            <person name="Saijo N."/>
            <person name="Kamatani N."/>
            <person name="Ozawa S."/>
            <person name="Sawada J."/>
        </authorList>
    </citation>
    <scope>VARIANTS MET-12; LEU-13; LYS-141; GLN-160; ARG-354; LEU-431; ASN-441 AND LEU-489</scope>
</reference>
<reference key="46">
    <citation type="journal article" date="2019" name="Cells">
        <title>Functional Characterization of Clinically-Relevant Rare Variants in ABCG2 Identified in a Gout and Hyperuricemia Cohort.</title>
        <authorList>
            <person name="Toyoda Y."/>
            <person name="Mancikova A."/>
            <person name="Krylov V."/>
            <person name="Morimoto K."/>
            <person name="Pavelcova K."/>
            <person name="Bohata J."/>
            <person name="Pavelka K."/>
            <person name="Pavlikova M."/>
            <person name="Suzuki H."/>
            <person name="Matsuo H."/>
            <person name="Takada T."/>
            <person name="Stiburkova B."/>
        </authorList>
    </citation>
    <scope>VARIANTS TRP-147; MET-153; LYS-360 DEL; CYS-373; ALA-421; MET-434; PRO-476; ARG-572 AND ASN-620</scope>
    <scope>CHARACTERIZATION OF VARIANTS LYS-141; TRP-147; MET-153; LYS-360 DEL; CYS-373; ALA-421; MET-434; PRO-476; ARG-572 AND ASN-620</scope>
    <scope>FUNCTION</scope>
    <scope>CATALYTIC ACTIVITY</scope>
    <scope>SUBCELLULAR LOCATION</scope>
</reference>
<proteinExistence type="evidence at protein level"/>
<evidence type="ECO:0000250" key="1">
    <source>
        <dbReference type="UniProtKB" id="Q7TMS5"/>
    </source>
</evidence>
<evidence type="ECO:0000255" key="2"/>
<evidence type="ECO:0000255" key="3">
    <source>
        <dbReference type="PROSITE-ProRule" id="PRU00434"/>
    </source>
</evidence>
<evidence type="ECO:0000269" key="4">
    <source>
    </source>
</evidence>
<evidence type="ECO:0000269" key="5">
    <source>
    </source>
</evidence>
<evidence type="ECO:0000269" key="6">
    <source>
    </source>
</evidence>
<evidence type="ECO:0000269" key="7">
    <source>
    </source>
</evidence>
<evidence type="ECO:0000269" key="8">
    <source>
    </source>
</evidence>
<evidence type="ECO:0000269" key="9">
    <source>
    </source>
</evidence>
<evidence type="ECO:0000269" key="10">
    <source>
    </source>
</evidence>
<evidence type="ECO:0000269" key="11">
    <source>
    </source>
</evidence>
<evidence type="ECO:0000269" key="12">
    <source>
    </source>
</evidence>
<evidence type="ECO:0000269" key="13">
    <source>
    </source>
</evidence>
<evidence type="ECO:0000269" key="14">
    <source>
    </source>
</evidence>
<evidence type="ECO:0000269" key="15">
    <source>
    </source>
</evidence>
<evidence type="ECO:0000269" key="16">
    <source>
    </source>
</evidence>
<evidence type="ECO:0000269" key="17">
    <source>
    </source>
</evidence>
<evidence type="ECO:0000269" key="18">
    <source>
    </source>
</evidence>
<evidence type="ECO:0000269" key="19">
    <source>
    </source>
</evidence>
<evidence type="ECO:0000269" key="20">
    <source>
    </source>
</evidence>
<evidence type="ECO:0000269" key="21">
    <source>
    </source>
</evidence>
<evidence type="ECO:0000269" key="22">
    <source>
    </source>
</evidence>
<evidence type="ECO:0000269" key="23">
    <source>
    </source>
</evidence>
<evidence type="ECO:0000269" key="24">
    <source>
    </source>
</evidence>
<evidence type="ECO:0000269" key="25">
    <source>
    </source>
</evidence>
<evidence type="ECO:0000269" key="26">
    <source>
    </source>
</evidence>
<evidence type="ECO:0000269" key="27">
    <source>
    </source>
</evidence>
<evidence type="ECO:0000269" key="28">
    <source>
    </source>
</evidence>
<evidence type="ECO:0000269" key="29">
    <source>
    </source>
</evidence>
<evidence type="ECO:0000269" key="30">
    <source>
    </source>
</evidence>
<evidence type="ECO:0000269" key="31">
    <source>
    </source>
</evidence>
<evidence type="ECO:0000269" key="32">
    <source>
    </source>
</evidence>
<evidence type="ECO:0000269" key="33">
    <source>
    </source>
</evidence>
<evidence type="ECO:0000269" key="34">
    <source>
    </source>
</evidence>
<evidence type="ECO:0000269" key="35">
    <source>
    </source>
</evidence>
<evidence type="ECO:0000269" key="36">
    <source>
    </source>
</evidence>
<evidence type="ECO:0000269" key="37">
    <source>
    </source>
</evidence>
<evidence type="ECO:0000269" key="38">
    <source>
    </source>
</evidence>
<evidence type="ECO:0000269" key="39">
    <source>
    </source>
</evidence>
<evidence type="ECO:0000269" key="40">
    <source ref="11"/>
</evidence>
<evidence type="ECO:0000269" key="41">
    <source ref="8"/>
</evidence>
<evidence type="ECO:0000269" key="42">
    <source ref="9"/>
</evidence>
<evidence type="ECO:0000303" key="43">
    <source>
    </source>
</evidence>
<evidence type="ECO:0000305" key="44"/>
<evidence type="ECO:0000305" key="45">
    <source>
    </source>
</evidence>
<evidence type="ECO:0000305" key="46">
    <source>
    </source>
</evidence>
<evidence type="ECO:0000305" key="47">
    <source>
    </source>
</evidence>
<evidence type="ECO:0000305" key="48">
    <source>
    </source>
</evidence>
<evidence type="ECO:0000305" key="49">
    <source>
    </source>
</evidence>
<evidence type="ECO:0007744" key="50">
    <source>
        <dbReference type="PDB" id="5NJ3"/>
    </source>
</evidence>
<evidence type="ECO:0007744" key="51">
    <source>
        <dbReference type="PDB" id="5NJG"/>
    </source>
</evidence>
<evidence type="ECO:0007744" key="52">
    <source>
        <dbReference type="PDB" id="6HBU"/>
    </source>
</evidence>
<evidence type="ECO:0007744" key="53">
    <source>
        <dbReference type="PDB" id="6HZM"/>
    </source>
</evidence>
<evidence type="ECO:0007829" key="54">
    <source>
        <dbReference type="PDB" id="6HBU"/>
    </source>
</evidence>
<evidence type="ECO:0007829" key="55">
    <source>
        <dbReference type="PDB" id="6VXF"/>
    </source>
</evidence>
<evidence type="ECO:0007829" key="56">
    <source>
        <dbReference type="PDB" id="7NEQ"/>
    </source>
</evidence>
<evidence type="ECO:0007829" key="57">
    <source>
        <dbReference type="PDB" id="7OJH"/>
    </source>
</evidence>
<evidence type="ECO:0007829" key="58">
    <source>
        <dbReference type="PDB" id="8PXO"/>
    </source>
</evidence>
<evidence type="ECO:0007829" key="59">
    <source>
        <dbReference type="PDB" id="8QCM"/>
    </source>
</evidence>
<organism>
    <name type="scientific">Homo sapiens</name>
    <name type="common">Human</name>
    <dbReference type="NCBI Taxonomy" id="9606"/>
    <lineage>
        <taxon>Eukaryota</taxon>
        <taxon>Metazoa</taxon>
        <taxon>Chordata</taxon>
        <taxon>Craniata</taxon>
        <taxon>Vertebrata</taxon>
        <taxon>Euteleostomi</taxon>
        <taxon>Mammalia</taxon>
        <taxon>Eutheria</taxon>
        <taxon>Euarchontoglires</taxon>
        <taxon>Primates</taxon>
        <taxon>Haplorrhini</taxon>
        <taxon>Catarrhini</taxon>
        <taxon>Hominidae</taxon>
        <taxon>Homo</taxon>
    </lineage>
</organism>
<comment type="function">
    <text evidence="1 4 6 8 9 13 19 21 22 24 25 26 29 31 33 34 35 37 45">Broad substrate specificity ATP-dependent transporter of the ATP-binding cassette (ABC) family that actively extrudes a wide variety of physiological compounds, dietary toxins and xenobiotics from cells (PubMed:11306452, PubMed:12958161, PubMed:19506252, PubMed:20705604, PubMed:28554189, PubMed:30405239, PubMed:31003562). Involved in porphyrin homeostasis, mediating the export of protoporphyrin IX (PPIX) from both mitochondria to cytosol and cytosol to extracellular space, it also functions in the cellular export of heme (PubMed:20705604, PubMed:23189181). Also mediates the efflux of sphingosine-1-P from cells (PubMed:20110355). Acts as a urate exporter functioning in both renal and extrarenal urate excretion (PubMed:19506252, PubMed:20368174, PubMed:22132962, PubMed:31003562, PubMed:36749388). In kidney, it also functions as a physiological exporter of the uremic toxin indoxyl sulfate (By similarity). Also involved in the excretion of steroids like estrone 3-sulfate/E1S, 3beta-sulfooxy-androst-5-en-17-one/DHEAS, and other sulfate conjugates (PubMed:12682043, PubMed:28554189, PubMed:30405239). Mediates the secretion of the riboflavin and biotin vitamins into milk (By similarity). Extrudes pheophorbide a, a phototoxic porphyrin catabolite of chlorophyll, reducing its bioavailability (By similarity). Plays an important role in the exclusion of xenobiotics from the brain (Probable). It confers to cells a resistance to multiple drugs and other xenobiotics including mitoxantrone, pheophorbide, camptothecin, methotrexate, azidothymidine, and the anthracyclines daunorubicin and doxorubicin, through the control of their efflux (PubMed:11306452, PubMed:12477054, PubMed:15670731, PubMed:18056989, PubMed:31254042). In placenta, it limits the penetration of drugs from the maternal plasma into the fetus (By similarity). May play a role in early stem cell self-renewal by blocking differentiation (By similarity). In inflammatory macrophages, exports itaconate from the cytosol to the extracellular compartment and limits the activation of TFEB-dependent lysosome biogenesis involved in antibacterial innate immune response.</text>
</comment>
<comment type="catalytic activity">
    <reaction evidence="4 6 9 35">
        <text>ATP + H2O + xenobioticSide 1 = ADP + phosphate + xenobioticSide 2.</text>
        <dbReference type="EC" id="7.6.2.2"/>
    </reaction>
</comment>
<comment type="catalytic activity">
    <reaction evidence="36 46 47 48 49">
        <text>urate(in) + ATP + H2O = urate(out) + ADP + phosphate + H(+)</text>
        <dbReference type="Rhea" id="RHEA:16461"/>
        <dbReference type="ChEBI" id="CHEBI:15377"/>
        <dbReference type="ChEBI" id="CHEBI:15378"/>
        <dbReference type="ChEBI" id="CHEBI:17775"/>
        <dbReference type="ChEBI" id="CHEBI:30616"/>
        <dbReference type="ChEBI" id="CHEBI:43474"/>
        <dbReference type="ChEBI" id="CHEBI:456216"/>
    </reaction>
    <physiologicalReaction direction="left-to-right" evidence="26">
        <dbReference type="Rhea" id="RHEA:16462"/>
    </physiologicalReaction>
</comment>
<comment type="catalytic activity">
    <reaction evidence="1">
        <text>indoxyl sulfate(in) + ATP + H2O = indoxyl sulfate(out) + ADP + phosphate + H(+)</text>
        <dbReference type="Rhea" id="RHEA:61332"/>
        <dbReference type="ChEBI" id="CHEBI:15377"/>
        <dbReference type="ChEBI" id="CHEBI:15378"/>
        <dbReference type="ChEBI" id="CHEBI:30616"/>
        <dbReference type="ChEBI" id="CHEBI:43474"/>
        <dbReference type="ChEBI" id="CHEBI:144643"/>
        <dbReference type="ChEBI" id="CHEBI:456216"/>
    </reaction>
    <physiologicalReaction direction="left-to-right" evidence="1">
        <dbReference type="Rhea" id="RHEA:61333"/>
    </physiologicalReaction>
</comment>
<comment type="catalytic activity">
    <reaction evidence="22">
        <text>sphing-4-enine 1-phosphate(in) + ATP + H2O = sphing-4-enine 1-phosphate(out) + ADP + phosphate + H(+)</text>
        <dbReference type="Rhea" id="RHEA:38951"/>
        <dbReference type="ChEBI" id="CHEBI:15377"/>
        <dbReference type="ChEBI" id="CHEBI:15378"/>
        <dbReference type="ChEBI" id="CHEBI:30616"/>
        <dbReference type="ChEBI" id="CHEBI:43474"/>
        <dbReference type="ChEBI" id="CHEBI:60119"/>
        <dbReference type="ChEBI" id="CHEBI:456216"/>
    </reaction>
    <physiologicalReaction direction="left-to-right" evidence="22">
        <dbReference type="Rhea" id="RHEA:38952"/>
    </physiologicalReaction>
</comment>
<comment type="catalytic activity">
    <reaction evidence="8 31 33">
        <text>estrone 3-sulfate(in) + ATP + H2O = estrone 3-sulfate(out) + ADP + phosphate + H(+)</text>
        <dbReference type="Rhea" id="RHEA:61348"/>
        <dbReference type="ChEBI" id="CHEBI:15377"/>
        <dbReference type="ChEBI" id="CHEBI:15378"/>
        <dbReference type="ChEBI" id="CHEBI:30616"/>
        <dbReference type="ChEBI" id="CHEBI:43474"/>
        <dbReference type="ChEBI" id="CHEBI:60050"/>
        <dbReference type="ChEBI" id="CHEBI:456216"/>
    </reaction>
    <physiologicalReaction direction="left-to-right" evidence="8">
        <dbReference type="Rhea" id="RHEA:61349"/>
    </physiologicalReaction>
</comment>
<comment type="catalytic activity">
    <reaction evidence="8">
        <text>dehydroepiandrosterone 3-sulfate(in) + ATP + H2O = dehydroepiandrosterone 3-sulfate(out) + ADP + phosphate + H(+)</text>
        <dbReference type="Rhea" id="RHEA:61364"/>
        <dbReference type="ChEBI" id="CHEBI:15377"/>
        <dbReference type="ChEBI" id="CHEBI:15378"/>
        <dbReference type="ChEBI" id="CHEBI:30616"/>
        <dbReference type="ChEBI" id="CHEBI:43474"/>
        <dbReference type="ChEBI" id="CHEBI:57905"/>
        <dbReference type="ChEBI" id="CHEBI:456216"/>
    </reaction>
    <physiologicalReaction direction="left-to-right" evidence="8">
        <dbReference type="Rhea" id="RHEA:61365"/>
    </physiologicalReaction>
</comment>
<comment type="catalytic activity">
    <reaction evidence="8">
        <text>4-methylumbelliferone sulfate(in) + ATP + H2O = 4-methylumbelliferone sulfate(out) + ADP + phosphate + H(+)</text>
        <dbReference type="Rhea" id="RHEA:61368"/>
        <dbReference type="ChEBI" id="CHEBI:15377"/>
        <dbReference type="ChEBI" id="CHEBI:15378"/>
        <dbReference type="ChEBI" id="CHEBI:30616"/>
        <dbReference type="ChEBI" id="CHEBI:43474"/>
        <dbReference type="ChEBI" id="CHEBI:144581"/>
        <dbReference type="ChEBI" id="CHEBI:456216"/>
    </reaction>
    <physiologicalReaction direction="left-to-right" evidence="8">
        <dbReference type="Rhea" id="RHEA:61369"/>
    </physiologicalReaction>
</comment>
<comment type="catalytic activity">
    <reaction evidence="8">
        <text>5,7-dimethyl-2-methylamino-4-(3-pyridylmethyl)-1,3-benzothiazol-6-yl beta-D-glucuronate(in) + ATP + H2O = 5,7-dimethyl-2-methylamino-4-(3-pyridylmethyl)-1,3-benzothiazol-6-yl beta-D-glucuronate(out) + ADP + phosphate + H(+)</text>
        <dbReference type="Rhea" id="RHEA:61384"/>
        <dbReference type="ChEBI" id="CHEBI:15377"/>
        <dbReference type="ChEBI" id="CHEBI:15378"/>
        <dbReference type="ChEBI" id="CHEBI:30616"/>
        <dbReference type="ChEBI" id="CHEBI:43474"/>
        <dbReference type="ChEBI" id="CHEBI:144584"/>
        <dbReference type="ChEBI" id="CHEBI:456216"/>
    </reaction>
    <physiologicalReaction direction="left-to-right" evidence="8">
        <dbReference type="Rhea" id="RHEA:61385"/>
    </physiologicalReaction>
</comment>
<comment type="catalytic activity">
    <reaction evidence="8">
        <text>4-methylumbelliferone beta-D-glucuronate(in) + ATP + H2O = 4-methylumbelliferone beta-D-glucuronate(out) + ADP + phosphate + H(+)</text>
        <dbReference type="Rhea" id="RHEA:61372"/>
        <dbReference type="ChEBI" id="CHEBI:15377"/>
        <dbReference type="ChEBI" id="CHEBI:15378"/>
        <dbReference type="ChEBI" id="CHEBI:30616"/>
        <dbReference type="ChEBI" id="CHEBI:43474"/>
        <dbReference type="ChEBI" id="CHEBI:144582"/>
        <dbReference type="ChEBI" id="CHEBI:456216"/>
    </reaction>
    <physiologicalReaction direction="left-to-right" evidence="8">
        <dbReference type="Rhea" id="RHEA:61373"/>
    </physiologicalReaction>
</comment>
<comment type="catalytic activity">
    <reaction evidence="8">
        <text>5,7-dimethyl-2-methylamino-4-(3-pyridylmethyl)-1,3-benzothiazol-6-yl sulfate(in) + ATP + H2O = 5,7-dimethyl-2-methylamino-4-(3-pyridylmethyl)-1,3-benzothiazol-6-yl sulfate(out) + ADP + phosphate + H(+)</text>
        <dbReference type="Rhea" id="RHEA:61376"/>
        <dbReference type="ChEBI" id="CHEBI:15377"/>
        <dbReference type="ChEBI" id="CHEBI:15378"/>
        <dbReference type="ChEBI" id="CHEBI:30616"/>
        <dbReference type="ChEBI" id="CHEBI:43474"/>
        <dbReference type="ChEBI" id="CHEBI:144583"/>
        <dbReference type="ChEBI" id="CHEBI:456216"/>
    </reaction>
    <physiologicalReaction direction="left-to-right" evidence="8">
        <dbReference type="Rhea" id="RHEA:61377"/>
    </physiologicalReaction>
</comment>
<comment type="catalytic activity">
    <reaction evidence="8">
        <text>17beta-estradiol 17-O-(beta-D-glucuronate)(in) + ATP + H2O = 17beta-estradiol 17-O-(beta-D-glucuronate)(out) + ADP + phosphate + H(+)</text>
        <dbReference type="Rhea" id="RHEA:60128"/>
        <dbReference type="ChEBI" id="CHEBI:15377"/>
        <dbReference type="ChEBI" id="CHEBI:15378"/>
        <dbReference type="ChEBI" id="CHEBI:30616"/>
        <dbReference type="ChEBI" id="CHEBI:43474"/>
        <dbReference type="ChEBI" id="CHEBI:82961"/>
        <dbReference type="ChEBI" id="CHEBI:456216"/>
    </reaction>
    <physiologicalReaction direction="left-to-right" evidence="8">
        <dbReference type="Rhea" id="RHEA:60129"/>
    </physiologicalReaction>
</comment>
<comment type="catalytic activity">
    <reaction evidence="8">
        <text>methotrexate(in) + ATP + H2O = methotrexate(out) + ADP + phosphate + H(+)</text>
        <dbReference type="Rhea" id="RHEA:61356"/>
        <dbReference type="ChEBI" id="CHEBI:15377"/>
        <dbReference type="ChEBI" id="CHEBI:15378"/>
        <dbReference type="ChEBI" id="CHEBI:30616"/>
        <dbReference type="ChEBI" id="CHEBI:43474"/>
        <dbReference type="ChEBI" id="CHEBI:50681"/>
        <dbReference type="ChEBI" id="CHEBI:456216"/>
    </reaction>
    <physiologicalReaction direction="left-to-right" evidence="8">
        <dbReference type="Rhea" id="RHEA:61357"/>
    </physiologicalReaction>
</comment>
<comment type="catalytic activity">
    <reaction evidence="1">
        <text>riboflavin(in) + ATP + H2O = riboflavin(out) + ADP + phosphate + H(+)</text>
        <dbReference type="Rhea" id="RHEA:61352"/>
        <dbReference type="ChEBI" id="CHEBI:15377"/>
        <dbReference type="ChEBI" id="CHEBI:15378"/>
        <dbReference type="ChEBI" id="CHEBI:30616"/>
        <dbReference type="ChEBI" id="CHEBI:43474"/>
        <dbReference type="ChEBI" id="CHEBI:57986"/>
        <dbReference type="ChEBI" id="CHEBI:456216"/>
    </reaction>
    <physiologicalReaction direction="left-to-right" evidence="1">
        <dbReference type="Rhea" id="RHEA:61353"/>
    </physiologicalReaction>
</comment>
<comment type="catalytic activity">
    <reaction evidence="1">
        <text>pheophorbide a(in) + ATP + H2O = pheophorbide a(out) + ADP + phosphate + H(+)</text>
        <dbReference type="Rhea" id="RHEA:61360"/>
        <dbReference type="ChEBI" id="CHEBI:15377"/>
        <dbReference type="ChEBI" id="CHEBI:15378"/>
        <dbReference type="ChEBI" id="CHEBI:30616"/>
        <dbReference type="ChEBI" id="CHEBI:43474"/>
        <dbReference type="ChEBI" id="CHEBI:58687"/>
        <dbReference type="ChEBI" id="CHEBI:456216"/>
    </reaction>
    <physiologicalReaction direction="left-to-right" evidence="1">
        <dbReference type="Rhea" id="RHEA:61361"/>
    </physiologicalReaction>
</comment>
<comment type="catalytic activity">
    <reaction evidence="36">
        <text>itaconate(in) + ATP + H2O = itaconate(out) + ADP + phosphate + H(+)</text>
        <dbReference type="Rhea" id="RHEA:82291"/>
        <dbReference type="ChEBI" id="CHEBI:15377"/>
        <dbReference type="ChEBI" id="CHEBI:15378"/>
        <dbReference type="ChEBI" id="CHEBI:17240"/>
        <dbReference type="ChEBI" id="CHEBI:30616"/>
        <dbReference type="ChEBI" id="CHEBI:43474"/>
        <dbReference type="ChEBI" id="CHEBI:456216"/>
    </reaction>
    <physiologicalReaction direction="left-to-right" evidence="36">
        <dbReference type="Rhea" id="RHEA:82292"/>
    </physiologicalReaction>
</comment>
<comment type="activity regulation">
    <text evidence="6">Specifically inhibited by the fungal toxin fumitremorgin C and Ko143.</text>
</comment>
<comment type="biophysicochemical properties">
    <kinetics>
        <KM evidence="8">16.6 uM for estrone 3-sulfate</KM>
        <KM evidence="8">1.23 mM for ATP</KM>
        <KM evidence="8">12.9 uM for 4-methylumbelliferone sulfate</KM>
        <KM evidence="8">26.9 uM for 6-hydroxy-5,7-dimethyl-2-methylamino-4-(3-pyridylmethyl)benzothiazole sulfate</KM>
        <KM evidence="26">8.24 mM for urate</KM>
        <Vmax evidence="8">2.34 nmol/min/mg enzyme for estrone 3-sulfate transport</Vmax>
        <Vmax evidence="26">6.96 nmol/min/mg enzyme for urate transport</Vmax>
    </kinetics>
</comment>
<comment type="subunit">
    <text evidence="10 18 19 31">Homodimer; disulfide-linked (PubMed:15001581, PubMed:17686774, PubMed:18056989, PubMed:28554189). The minimal functional unit is a homodimer, but the major oligomeric form in plasma membrane is a homotetramer with possibility of higher order oligomerization up to homododecamers (PubMed:15001581).</text>
</comment>
<comment type="interaction">
    <interactant intactId="EBI-1569435">
        <id>Q9UNQ0</id>
    </interactant>
    <interactant intactId="EBI-1569435">
        <id>Q9UNQ0</id>
        <label>ABCG2</label>
    </interactant>
    <organismsDiffer>false</organismsDiffer>
    <experiments>5</experiments>
</comment>
<comment type="interaction">
    <interactant intactId="EBI-1569435">
        <id>Q9UNQ0</id>
    </interactant>
    <interactant intactId="EBI-3197846">
        <id>P22413</id>
        <label>ENPP1</label>
    </interactant>
    <organismsDiffer>false</organismsDiffer>
    <experiments>4</experiments>
</comment>
<comment type="interaction">
    <interactant intactId="EBI-1569435">
        <id>Q9UNQ0</id>
    </interactant>
    <interactant intactId="EBI-1018633">
        <id>P11309-2</id>
        <label>PIM1</label>
    </interactant>
    <organismsDiffer>false</organismsDiffer>
    <experiments>5</experiments>
</comment>
<comment type="interaction">
    <interactant intactId="EBI-1569435">
        <id>Q9UNQ0</id>
    </interactant>
    <interactant intactId="EBI-3390054">
        <id>P0CG48</id>
        <label>UBC</label>
    </interactant>
    <organismsDiffer>false</organismsDiffer>
    <experiments>2</experiments>
</comment>
<comment type="interaction">
    <interactant intactId="EBI-20717342">
        <id>Q9UNQ0-1</id>
    </interactant>
    <interactant intactId="EBI-20717342">
        <id>Q9UNQ0-1</id>
        <label>ABCG2</label>
    </interactant>
    <organismsDiffer>false</organismsDiffer>
    <experiments>3</experiments>
</comment>
<comment type="subcellular location">
    <subcellularLocation>
        <location evidence="10 14 15 19 34 35">Cell membrane</location>
        <topology evidence="2">Multi-pass membrane protein</topology>
    </subcellularLocation>
    <subcellularLocation>
        <location evidence="21">Apical cell membrane</location>
        <topology evidence="2">Multi-pass membrane protein</topology>
    </subcellularLocation>
    <subcellularLocation>
        <location evidence="29">Mitochondrion membrane</location>
        <topology evidence="2">Multi-pass membrane protein</topology>
    </subcellularLocation>
    <text evidence="32">Enriched in membrane lipid rafts.</text>
</comment>
<comment type="alternative products">
    <event type="alternative splicing"/>
    <isoform>
        <id>Q9UNQ0-1</id>
        <name>1</name>
        <sequence type="displayed"/>
    </isoform>
    <isoform>
        <id>Q9UNQ0-2</id>
        <name>2</name>
        <sequence type="described" ref="VSP_014232 VSP_014233"/>
    </isoform>
</comment>
<comment type="tissue specificity">
    <text evidence="9 38 39">Highly expressed in placenta (PubMed:9850061). Low expression in small intestine, liver and colon (PubMed:9861027). Expressed in brain (at protein level) (PubMed:12958161).</text>
</comment>
<comment type="domain">
    <text evidence="25">The extracellular loop 3 (ECL3) is involved in binding porphyrins and transfer them to other carriers, probably albumin.</text>
</comment>
<comment type="PTM">
    <text evidence="15 29">N-glycosylated (PubMed:15807535, PubMed:23189181). Glycosylation-deficient ABCG2 is normally expressed and functional.</text>
</comment>
<comment type="PTM">
    <text evidence="19">Phosphorylated. Phosphorylation at Thr-362 by PIM1 is induced by drugs like mitoxantrone and is associated with cells increased drug resistance. It regulates the localization to the plasma membrane, the homooligomerization and therefore, the activity of the transporter.</text>
</comment>
<comment type="polymorphism">
    <text evidence="27 28">Genetic variations in ABCG2 define the blood group Junior system (JR) [MIM:614490]. Individuals with Jr(a-) blood group lack the Jr(a) antigen on their red blood cells. These individuals may have anti-Jr(a) antibodies in their serum, which can cause transfusion reactions or hemolytic disease of the fetus or newborn. Although the clinical significance of the Jr(a-) blood group has been controversial, severe fatal hemolytic disease of the newborn has been reported. The Jr(a-) phenotype has a higher frequency in individuals of Asian descent, compared to those of European descent. The Jr(a-) phenotype is inherited as an autosomal recessive trait.</text>
</comment>
<comment type="polymorphism">
    <text evidence="20 21 24">Genetic variations in ABCG2 influence the variance in serum uric acid concentrations and define the serum uric acid concentration quantitative trait locus 1 (UAQTL1) [MIM:138900]. Excess serum accumulation of uric acid can lead to the development of gout, a common disorder characterized by tissue deposition of monosodium urate crystals as a consequence of hyperuricemia (PubMed:18834626, PubMed:19506252, PubMed:20368174).</text>
</comment>
<comment type="similarity">
    <text evidence="44">Belongs to the ABC transporter superfamily. ABCG family. Eye pigment precursor importer (TC 3.A.1.204) subfamily.</text>
</comment>
<comment type="caution">
    <text evidence="23 30">Was originally proposed to function as a glutathione transporter (PubMed:20332504). However, some evidences suggest it is not the case (PubMed:24312054).</text>
</comment>
<comment type="sequence caution" evidence="44">
    <conflict type="frameshift">
        <sequence resource="EMBL" id="AF093771"/>
    </conflict>
</comment>
<comment type="sequence caution" evidence="44">
    <conflict type="frameshift">
        <sequence resource="EMBL" id="AF093772"/>
    </conflict>
</comment>
<comment type="online information" name="ABCMdb">
    <link uri="http://abcm2.hegelab.org/search"/>
    <text>Database for mutations in ABC proteins</text>
</comment>
<comment type="online information" name="Protein Spotlight">
    <link uri="https://www.proteinspotlight.org/back_issues/222/"/>
    <text>The unwalkable disease - Issue 222 of February 2020</text>
</comment>
<accession>Q9UNQ0</accession>
<accession>A0A1W3</accession>
<accession>A8K1T5</accession>
<accession>O95374</accession>
<accession>Q4W5I3</accession>
<accession>Q53ZQ1</accession>
<accession>Q569L4</accession>
<accession>Q5YLG4</accession>
<accession>Q86V64</accession>
<accession>Q8IX16</accession>
<accession>Q96LD6</accession>
<accession>Q96TA8</accession>
<accession>Q9BY73</accession>
<accession>Q9NUS0</accession>
<gene>
    <name type="primary">ABCG2</name>
    <name type="synonym">ABCP</name>
    <name type="synonym">BCRP</name>
    <name type="synonym">BCRP1</name>
    <name type="synonym">MXR</name>
</gene>
<name>ABCG2_HUMAN</name>
<sequence length="655" mass="72314">MSSSNVEVFIPVSQGNTNGFPATASNDLKAFTEGAVLSFHNICYRVKLKSGFLPCRKPVEKEILSNINGIMKPGLNAILGPTGGGKSSLLDVLAARKDPSGLSGDVLINGAPRPANFKCNSGYVVQDDVVMGTLTVRENLQFSAALRLATTMTNHEKNERINRVIQELGLDKVADSKVGTQFIRGVSGGERKRTSIGMELITDPSILFLDEPTTGLDSSTANAVLLLLKRMSKQGRTIIFSIHQPRYSIFKLFDSLTLLASGRLMFHGPAQEALGYFESAGYHCEAYNNPADFFLDIINGDSTAVALNREEDFKATEIIEPSKQDKPLIEKLAEIYVNSSFYKETKAELHQLSGGEKKKKITVFKEISYTTSFCHQLRWVSKRSFKNLLGNPQASIAQIIVTVVLGLVIGAIYFGLKNDSTGIQNRAGVLFFLTTNQCFSSVSAVELFVVEKKLFIHEYISGYYRVSSYFLGKLLSDLLPMRMLPSIIFTCIVYFMLGLKPKADAFFVMMFTLMMVAYSASSMALAIAAGQSVVSVATLLMTICFVFMMIFSGLLVNLTTIASWLSWLQYFSIPRYGFTALQHNEFLGQNFCPGLNATGNNPCNYATCTGEEYLVKQGIDLSPWGLWKNHVALACMIVIFLTIAYLKLLFLKKYS</sequence>
<keyword id="KW-0002">3D-structure</keyword>
<keyword id="KW-0025">Alternative splicing</keyword>
<keyword id="KW-0067">ATP-binding</keyword>
<keyword id="KW-1003">Cell membrane</keyword>
<keyword id="KW-1015">Disulfide bond</keyword>
<keyword id="KW-0325">Glycoprotein</keyword>
<keyword id="KW-0445">Lipid transport</keyword>
<keyword id="KW-0472">Membrane</keyword>
<keyword id="KW-0496">Mitochondrion</keyword>
<keyword id="KW-0547">Nucleotide-binding</keyword>
<keyword id="KW-0597">Phosphoprotein</keyword>
<keyword id="KW-1267">Proteomics identification</keyword>
<keyword id="KW-1185">Reference proteome</keyword>
<keyword id="KW-1278">Translocase</keyword>
<keyword id="KW-0812">Transmembrane</keyword>
<keyword id="KW-1133">Transmembrane helix</keyword>
<keyword id="KW-0813">Transport</keyword>
<dbReference type="EC" id="7.6.2.2" evidence="4 35"/>
<dbReference type="EMBL" id="AF103796">
    <property type="protein sequence ID" value="AAD09188.1"/>
    <property type="molecule type" value="mRNA"/>
</dbReference>
<dbReference type="EMBL" id="AF098951">
    <property type="protein sequence ID" value="AAC97367.1"/>
    <property type="molecule type" value="mRNA"/>
</dbReference>
<dbReference type="EMBL" id="AB056867">
    <property type="protein sequence ID" value="BAB39212.1"/>
    <property type="molecule type" value="mRNA"/>
</dbReference>
<dbReference type="EMBL" id="AB051855">
    <property type="protein sequence ID" value="BAB46933.1"/>
    <property type="molecule type" value="mRNA"/>
</dbReference>
<dbReference type="EMBL" id="AY017168">
    <property type="protein sequence ID" value="AAG52982.1"/>
    <property type="molecule type" value="mRNA"/>
</dbReference>
<dbReference type="EMBL" id="AY289766">
    <property type="protein sequence ID" value="AAP44087.1"/>
    <property type="molecule type" value="mRNA"/>
</dbReference>
<dbReference type="EMBL" id="AY288307">
    <property type="protein sequence ID" value="AAP31310.1"/>
    <property type="molecule type" value="mRNA"/>
</dbReference>
<dbReference type="EMBL" id="AF463519">
    <property type="protein sequence ID" value="AAO14617.1"/>
    <property type="molecule type" value="mRNA"/>
</dbReference>
<dbReference type="EMBL" id="AY333755">
    <property type="protein sequence ID" value="AAQ92941.1"/>
    <property type="molecule type" value="mRNA"/>
</dbReference>
<dbReference type="EMBL" id="AY333756">
    <property type="protein sequence ID" value="AAQ92942.1"/>
    <property type="molecule type" value="mRNA"/>
</dbReference>
<dbReference type="EMBL" id="AK002040">
    <property type="protein sequence ID" value="BAA92050.1"/>
    <property type="molecule type" value="mRNA"/>
</dbReference>
<dbReference type="EMBL" id="AK290000">
    <property type="protein sequence ID" value="BAF82689.1"/>
    <property type="molecule type" value="mRNA"/>
</dbReference>
<dbReference type="EMBL" id="DQ996467">
    <property type="protein sequence ID" value="ABI97388.1"/>
    <property type="molecule type" value="Genomic_DNA"/>
</dbReference>
<dbReference type="EMBL" id="AC084732">
    <property type="status" value="NOT_ANNOTATED_CDS"/>
    <property type="molecule type" value="Genomic_DNA"/>
</dbReference>
<dbReference type="EMBL" id="AC097484">
    <property type="protein sequence ID" value="AAY40902.1"/>
    <property type="molecule type" value="Genomic_DNA"/>
</dbReference>
<dbReference type="EMBL" id="BC021281">
    <property type="protein sequence ID" value="AAH21281.1"/>
    <property type="molecule type" value="mRNA"/>
</dbReference>
<dbReference type="EMBL" id="BC092408">
    <property type="protein sequence ID" value="AAH92408.1"/>
    <property type="molecule type" value="mRNA"/>
</dbReference>
<dbReference type="EMBL" id="AF093771">
    <property type="status" value="NOT_ANNOTATED_CDS"/>
    <property type="molecule type" value="mRNA"/>
</dbReference>
<dbReference type="EMBL" id="AF093772">
    <property type="status" value="NOT_ANNOTATED_CDS"/>
    <property type="molecule type" value="mRNA"/>
</dbReference>
<dbReference type="CCDS" id="CCDS3628.1">
    <molecule id="Q9UNQ0-1"/>
</dbReference>
<dbReference type="CCDS" id="CCDS58910.1">
    <molecule id="Q9UNQ0-2"/>
</dbReference>
<dbReference type="RefSeq" id="NP_001244315.1">
    <molecule id="Q9UNQ0-2"/>
    <property type="nucleotide sequence ID" value="NM_001257386.2"/>
</dbReference>
<dbReference type="RefSeq" id="NP_001335914.1">
    <molecule id="Q9UNQ0-1"/>
    <property type="nucleotide sequence ID" value="NM_001348985.1"/>
</dbReference>
<dbReference type="RefSeq" id="NP_001335915.1">
    <molecule id="Q9UNQ0-1"/>
    <property type="nucleotide sequence ID" value="NM_001348986.1"/>
</dbReference>
<dbReference type="RefSeq" id="NP_001335917.1">
    <molecule id="Q9UNQ0-1"/>
    <property type="nucleotide sequence ID" value="NM_001348988.1"/>
</dbReference>
<dbReference type="RefSeq" id="NP_001335918.1">
    <molecule id="Q9UNQ0-1"/>
    <property type="nucleotide sequence ID" value="NM_001348989.2"/>
</dbReference>
<dbReference type="RefSeq" id="NP_004818.2">
    <molecule id="Q9UNQ0-1"/>
    <property type="nucleotide sequence ID" value="NM_004827.3"/>
</dbReference>
<dbReference type="RefSeq" id="XP_005263412.1">
    <property type="nucleotide sequence ID" value="XM_005263355.3"/>
</dbReference>
<dbReference type="RefSeq" id="XP_011530722.1">
    <molecule id="Q9UNQ0-1"/>
    <property type="nucleotide sequence ID" value="XM_011532420.4"/>
</dbReference>
<dbReference type="RefSeq" id="XP_054207259.1">
    <molecule id="Q9UNQ0-1"/>
    <property type="nucleotide sequence ID" value="XM_054351284.1"/>
</dbReference>
<dbReference type="PDB" id="5NJ3">
    <property type="method" value="EM"/>
    <property type="resolution" value="3.78 A"/>
    <property type="chains" value="A/B=2-655"/>
</dbReference>
<dbReference type="PDB" id="5NJG">
    <property type="method" value="EM"/>
    <property type="resolution" value="3.78 A"/>
    <property type="chains" value="A/B=2-655"/>
</dbReference>
<dbReference type="PDB" id="6ETI">
    <property type="method" value="EM"/>
    <property type="resolution" value="3.10 A"/>
    <property type="chains" value="A/B=1-655"/>
</dbReference>
<dbReference type="PDB" id="6FEQ">
    <property type="method" value="EM"/>
    <property type="resolution" value="3.60 A"/>
    <property type="chains" value="A/B=1-655"/>
</dbReference>
<dbReference type="PDB" id="6FFC">
    <property type="method" value="EM"/>
    <property type="resolution" value="3.56 A"/>
    <property type="chains" value="A/B=2-655"/>
</dbReference>
<dbReference type="PDB" id="6HBU">
    <property type="method" value="EM"/>
    <property type="resolution" value="3.09 A"/>
    <property type="chains" value="A/B=1-655"/>
</dbReference>
<dbReference type="PDB" id="6HCO">
    <property type="method" value="EM"/>
    <property type="resolution" value="3.58 A"/>
    <property type="chains" value="A/B=2-655"/>
</dbReference>
<dbReference type="PDB" id="6HIJ">
    <property type="method" value="EM"/>
    <property type="resolution" value="3.56 A"/>
    <property type="chains" value="A/B=1-655"/>
</dbReference>
<dbReference type="PDB" id="6HZM">
    <property type="method" value="EM"/>
    <property type="resolution" value="3.09 A"/>
    <property type="chains" value="A/B=1-655"/>
</dbReference>
<dbReference type="PDB" id="6VXF">
    <property type="method" value="EM"/>
    <property type="resolution" value="3.50 A"/>
    <property type="chains" value="A/B=1-655"/>
</dbReference>
<dbReference type="PDB" id="6VXH">
    <property type="method" value="EM"/>
    <property type="resolution" value="4.00 A"/>
    <property type="chains" value="A/B=1-655"/>
</dbReference>
<dbReference type="PDB" id="6VXI">
    <property type="method" value="EM"/>
    <property type="resolution" value="3.70 A"/>
    <property type="chains" value="A/B=1-655"/>
</dbReference>
<dbReference type="PDB" id="6VXJ">
    <property type="method" value="EM"/>
    <property type="resolution" value="4.10 A"/>
    <property type="chains" value="A/B=1-655"/>
</dbReference>
<dbReference type="PDB" id="7NEQ">
    <property type="method" value="EM"/>
    <property type="resolution" value="3.12 A"/>
    <property type="chains" value="A/B=1-655"/>
</dbReference>
<dbReference type="PDB" id="7NEZ">
    <property type="method" value="EM"/>
    <property type="resolution" value="3.39 A"/>
    <property type="chains" value="A/B=1-655"/>
</dbReference>
<dbReference type="PDB" id="7NFD">
    <property type="method" value="EM"/>
    <property type="resolution" value="3.51 A"/>
    <property type="chains" value="A/B=1-655"/>
</dbReference>
<dbReference type="PDB" id="7OJ8">
    <property type="method" value="EM"/>
    <property type="resolution" value="3.40 A"/>
    <property type="chains" value="A/B=2-655"/>
</dbReference>
<dbReference type="PDB" id="7OJH">
    <property type="method" value="EM"/>
    <property type="resolution" value="3.10 A"/>
    <property type="chains" value="A/B=2-655"/>
</dbReference>
<dbReference type="PDB" id="7OJI">
    <property type="method" value="EM"/>
    <property type="resolution" value="3.40 A"/>
    <property type="chains" value="A/B=2-655"/>
</dbReference>
<dbReference type="PDB" id="8BHT">
    <property type="method" value="EM"/>
    <property type="resolution" value="3.10 A"/>
    <property type="chains" value="A/B=2-655"/>
</dbReference>
<dbReference type="PDB" id="8BI0">
    <property type="method" value="EM"/>
    <property type="resolution" value="3.20 A"/>
    <property type="chains" value="A/B=2-655"/>
</dbReference>
<dbReference type="PDB" id="8P7W">
    <property type="method" value="EM"/>
    <property type="resolution" value="3.04 A"/>
    <property type="chains" value="A/B=1-655"/>
</dbReference>
<dbReference type="PDB" id="8P8A">
    <property type="method" value="EM"/>
    <property type="resolution" value="3.20 A"/>
    <property type="chains" value="A/B=1-655"/>
</dbReference>
<dbReference type="PDB" id="8P8J">
    <property type="method" value="EM"/>
    <property type="resolution" value="3.49 A"/>
    <property type="chains" value="A/B=1-655"/>
</dbReference>
<dbReference type="PDB" id="8PXO">
    <property type="method" value="EM"/>
    <property type="resolution" value="3.00 A"/>
    <property type="chains" value="A/B=2-655"/>
</dbReference>
<dbReference type="PDB" id="8PY4">
    <property type="method" value="EM"/>
    <property type="resolution" value="3.00 A"/>
    <property type="chains" value="A/B=2-655"/>
</dbReference>
<dbReference type="PDB" id="8Q7B">
    <property type="method" value="EM"/>
    <property type="resolution" value="2.56 A"/>
    <property type="chains" value="A/B=1-655"/>
</dbReference>
<dbReference type="PDB" id="8QCM">
    <property type="method" value="EM"/>
    <property type="resolution" value="2.39 A"/>
    <property type="chains" value="A/B=2-655"/>
</dbReference>
<dbReference type="PDB" id="8U2C">
    <property type="method" value="EM"/>
    <property type="resolution" value="2.50 A"/>
    <property type="chains" value="A/B=1-655"/>
</dbReference>
<dbReference type="PDBsum" id="5NJ3"/>
<dbReference type="PDBsum" id="5NJG"/>
<dbReference type="PDBsum" id="6ETI"/>
<dbReference type="PDBsum" id="6FEQ"/>
<dbReference type="PDBsum" id="6FFC"/>
<dbReference type="PDBsum" id="6HBU"/>
<dbReference type="PDBsum" id="6HCO"/>
<dbReference type="PDBsum" id="6HIJ"/>
<dbReference type="PDBsum" id="6HZM"/>
<dbReference type="PDBsum" id="6VXF"/>
<dbReference type="PDBsum" id="6VXH"/>
<dbReference type="PDBsum" id="6VXI"/>
<dbReference type="PDBsum" id="6VXJ"/>
<dbReference type="PDBsum" id="7NEQ"/>
<dbReference type="PDBsum" id="7NEZ"/>
<dbReference type="PDBsum" id="7NFD"/>
<dbReference type="PDBsum" id="7OJ8"/>
<dbReference type="PDBsum" id="7OJH"/>
<dbReference type="PDBsum" id="7OJI"/>
<dbReference type="PDBsum" id="8BHT"/>
<dbReference type="PDBsum" id="8BI0"/>
<dbReference type="PDBsum" id="8P7W"/>
<dbReference type="PDBsum" id="8P8A"/>
<dbReference type="PDBsum" id="8P8J"/>
<dbReference type="PDBsum" id="8PXO"/>
<dbReference type="PDBsum" id="8PY4"/>
<dbReference type="PDBsum" id="8Q7B"/>
<dbReference type="PDBsum" id="8QCM"/>
<dbReference type="PDBsum" id="8U2C"/>
<dbReference type="EMDB" id="EMD-0190"/>
<dbReference type="EMDB" id="EMD-0196"/>
<dbReference type="EMDB" id="EMD-12290"/>
<dbReference type="EMDB" id="EMD-12295"/>
<dbReference type="EMDB" id="EMD-12300"/>
<dbReference type="EMDB" id="EMD-12939"/>
<dbReference type="EMDB" id="EMD-12951"/>
<dbReference type="EMDB" id="EMD-12952"/>
<dbReference type="EMDB" id="EMD-16069"/>
<dbReference type="EMDB" id="EMD-16075"/>
<dbReference type="EMDB" id="EMD-17537"/>
<dbReference type="EMDB" id="EMD-17543"/>
<dbReference type="EMDB" id="EMD-17547"/>
<dbReference type="EMDB" id="EMD-18003"/>
<dbReference type="EMDB" id="EMD-18016"/>
<dbReference type="EMDB" id="EMD-18210"/>
<dbReference type="EMDB" id="EMD-18330"/>
<dbReference type="EMDB" id="EMD-21436"/>
<dbReference type="EMDB" id="EMD-21437"/>
<dbReference type="EMDB" id="EMD-21438"/>
<dbReference type="EMDB" id="EMD-21439"/>
<dbReference type="EMDB" id="EMD-21440"/>
<dbReference type="EMDB" id="EMD-21441"/>
<dbReference type="EMDB" id="EMD-2715"/>
<dbReference type="EMDB" id="EMD-3654"/>
<dbReference type="EMDB" id="EMD-3953"/>
<dbReference type="EMDB" id="EMD-41845"/>
<dbReference type="EMDB" id="EMD-4246"/>
<dbReference type="EMDB" id="EMD-4256"/>
<dbReference type="SMR" id="Q9UNQ0"/>
<dbReference type="BioGRID" id="114821">
    <property type="interactions" value="62"/>
</dbReference>
<dbReference type="DIP" id="DIP-29162N"/>
<dbReference type="FunCoup" id="Q9UNQ0">
    <property type="interactions" value="400"/>
</dbReference>
<dbReference type="IntAct" id="Q9UNQ0">
    <property type="interactions" value="27"/>
</dbReference>
<dbReference type="MINT" id="Q9UNQ0"/>
<dbReference type="STRING" id="9606.ENSP00000498246"/>
<dbReference type="BindingDB" id="Q9UNQ0"/>
<dbReference type="ChEMBL" id="CHEMBL5393"/>
<dbReference type="DrugBank" id="DB12001">
    <property type="generic name" value="Abemaciclib"/>
</dbReference>
<dbReference type="DrugBank" id="DB08916">
    <property type="generic name" value="Afatinib"/>
</dbReference>
<dbReference type="DrugBank" id="DB11363">
    <property type="generic name" value="Alectinib"/>
</dbReference>
<dbReference type="DrugBank" id="DB00437">
    <property type="generic name" value="Allopurinol"/>
</dbReference>
<dbReference type="DrugBank" id="DB12015">
    <property type="generic name" value="Alpelisib"/>
</dbReference>
<dbReference type="DrugBank" id="DB03496">
    <property type="generic name" value="Alvocidib"/>
</dbReference>
<dbReference type="DrugBank" id="DB06288">
    <property type="generic name" value="Amisulpride"/>
</dbReference>
<dbReference type="DrugBank" id="DB11901">
    <property type="generic name" value="Apalutamide"/>
</dbReference>
<dbReference type="DrugBank" id="DB06605">
    <property type="generic name" value="Apixaban"/>
</dbReference>
<dbReference type="DrugBank" id="DB15059">
    <property type="generic name" value="Aprocitentan"/>
</dbReference>
<dbReference type="DrugBank" id="DB01238">
    <property type="generic name" value="Aripiprazole"/>
</dbReference>
<dbReference type="DrugBank" id="DB09274">
    <property type="generic name" value="Artesunate"/>
</dbReference>
<dbReference type="DrugBank" id="DB12597">
    <property type="generic name" value="Asciminib"/>
</dbReference>
<dbReference type="DrugBank" id="DB16098">
    <property type="generic name" value="Atogepant"/>
</dbReference>
<dbReference type="DrugBank" id="DB06237">
    <property type="generic name" value="Avanafil"/>
</dbReference>
<dbReference type="DrugBank" id="DB15233">
    <property type="generic name" value="Avapritinib"/>
</dbReference>
<dbReference type="DrugBank" id="DB11995">
    <property type="generic name" value="Avatrombopag"/>
</dbReference>
<dbReference type="DrugBank" id="DB16407">
    <property type="generic name" value="Azvudine"/>
</dbReference>
<dbReference type="DrugBank" id="DB13997">
    <property type="generic name" value="Baloxavir marboxil"/>
</dbReference>
<dbReference type="DrugBank" id="DB11817">
    <property type="generic name" value="Baricitinib"/>
</dbReference>
<dbReference type="DrugBank" id="DB00394">
    <property type="generic name" value="Beclomethasone dipropionate"/>
</dbReference>
<dbReference type="DrugBank" id="DB16703">
    <property type="generic name" value="Belumosudil"/>
</dbReference>
<dbReference type="DrugBank" id="DB15982">
    <property type="generic name" value="Berotralstat"/>
</dbReference>
<dbReference type="DrugBank" id="DB11967">
    <property type="generic name" value="Binimetinib"/>
</dbReference>
<dbReference type="DrugBank" id="DB04851">
    <property type="generic name" value="Biricodar"/>
</dbReference>
<dbReference type="DrugBank" id="DB12267">
    <property type="generic name" value="Brigatinib"/>
</dbReference>
<dbReference type="DrugBank" id="DB12151">
    <property type="generic name" value="Brincidofovir"/>
</dbReference>
<dbReference type="DrugBank" id="DB00921">
    <property type="generic name" value="Buprenorphine"/>
</dbReference>
<dbReference type="DrugBank" id="DB06772">
    <property type="generic name" value="Cabazitaxel"/>
</dbReference>
<dbReference type="DrugBank" id="DB11751">
    <property type="generic name" value="Cabotegravir"/>
</dbReference>
<dbReference type="DrugBank" id="DB00201">
    <property type="generic name" value="Caffeine"/>
</dbReference>
<dbReference type="DrugBank" id="DB04690">
    <property type="generic name" value="Camptothecin"/>
</dbReference>
<dbReference type="DrugBank" id="DB08907">
    <property type="generic name" value="Canagliflozin"/>
</dbReference>
<dbReference type="DrugBank" id="DB09061">
    <property type="generic name" value="Cannabidiol"/>
</dbReference>
<dbReference type="DrugBank" id="DB14737">
    <property type="generic name" value="Cannabinol"/>
</dbReference>
<dbReference type="DrugBank" id="DB12218">
    <property type="generic name" value="Capivasertib"/>
</dbReference>
<dbReference type="DrugBank" id="DB11791">
    <property type="generic name" value="Capmatinib"/>
</dbReference>
<dbReference type="DrugBank" id="DB00958">
    <property type="generic name" value="Carboplatin"/>
</dbReference>
<dbReference type="DrugBank" id="DB00482">
    <property type="generic name" value="Celecoxib"/>
</dbReference>
<dbReference type="DrugBank" id="DB00439">
    <property type="generic name" value="Cerivastatin"/>
</dbReference>
<dbReference type="DrugBank" id="DB04540">
    <property type="generic name" value="Cholesterol"/>
</dbReference>
<dbReference type="DrugBank" id="DB00515">
    <property type="generic name" value="Cisplatin"/>
</dbReference>
<dbReference type="DrugBank" id="DB00242">
    <property type="generic name" value="Cladribine"/>
</dbReference>
<dbReference type="DrugBank" id="DB00631">
    <property type="generic name" value="Clofarabine"/>
</dbReference>
<dbReference type="DrugBank" id="DB00845">
    <property type="generic name" value="Clofazimine"/>
</dbReference>
<dbReference type="DrugBank" id="DB09065">
    <property type="generic name" value="Cobicistat"/>
</dbReference>
<dbReference type="DrugBank" id="DB05239">
    <property type="generic name" value="Cobimetinib"/>
</dbReference>
<dbReference type="DrugBank" id="DB00286">
    <property type="generic name" value="Conjugated estrogens"/>
</dbReference>
<dbReference type="DrugBank" id="DB12483">
    <property type="generic name" value="Copanlisib"/>
</dbReference>
<dbReference type="DrugBank" id="DB00091">
    <property type="generic name" value="Cyclosporine"/>
</dbReference>
<dbReference type="DrugBank" id="DB08912">
    <property type="generic name" value="Dabrafenib"/>
</dbReference>
<dbReference type="DrugBank" id="DB09102">
    <property type="generic name" value="Daclatasvir"/>
</dbReference>
<dbReference type="DrugBank" id="DB11963">
    <property type="generic name" value="Dacomitinib"/>
</dbReference>
<dbReference type="DrugBank" id="DB00970">
    <property type="generic name" value="Dactinomycin"/>
</dbReference>
<dbReference type="DrugBank" id="DB02115">
    <property type="generic name" value="Daidzin"/>
</dbReference>
<dbReference type="DrugBank" id="DB15401">
    <property type="generic name" value="Danicopan"/>
</dbReference>
<dbReference type="DrugBank" id="DB11682">
    <property type="generic name" value="Daprodustat"/>
</dbReference>
<dbReference type="DrugBank" id="DB12941">
    <property type="generic name" value="Darolutamide"/>
</dbReference>
<dbReference type="DrugBank" id="DB09183">
    <property type="generic name" value="Dasabuvir"/>
</dbReference>
<dbReference type="DrugBank" id="DB01254">
    <property type="generic name" value="Dasatinib"/>
</dbReference>
<dbReference type="DrugBank" id="DB00694">
    <property type="generic name" value="Daunorubicin"/>
</dbReference>
<dbReference type="DrugBank" id="DB11943">
    <property type="generic name" value="Delafloxacin"/>
</dbReference>
<dbReference type="DrugBank" id="DB16650">
    <property type="generic name" value="Deucravacitinib"/>
</dbReference>
<dbReference type="DrugBank" id="DB18847">
    <property type="generic name" value="Deuruxolitinib"/>
</dbReference>
<dbReference type="DrugBank" id="DB01234">
    <property type="generic name" value="Dexamethasone"/>
</dbReference>
<dbReference type="DrugBank" id="DB14649">
    <property type="generic name" value="Dexamethasone acetate"/>
</dbReference>
<dbReference type="DrugBank" id="DB00255">
    <property type="generic name" value="Diethylstilbestrol"/>
</dbReference>
<dbReference type="DrugBank" id="DB01248">
    <property type="generic name" value="Docetaxel"/>
</dbReference>
<dbReference type="DrugBank" id="DB08930">
    <property type="generic name" value="Dolutegravir"/>
</dbReference>
<dbReference type="DrugBank" id="DB00843">
    <property type="generic name" value="Donepezil"/>
</dbReference>
<dbReference type="DrugBank" id="DB05928">
    <property type="generic name" value="Dovitinib"/>
</dbReference>
<dbReference type="DrugBank" id="DB00997">
    <property type="generic name" value="Doxorubicin"/>
</dbReference>
<dbReference type="DrugBank" id="DB00470">
    <property type="generic name" value="Dronabinol"/>
</dbReference>
<dbReference type="DrugBank" id="DB11952">
    <property type="generic name" value="Duvelisib"/>
</dbReference>
<dbReference type="DrugBank" id="DB06374">
    <property type="generic name" value="Elacestrant"/>
</dbReference>
<dbReference type="DrugBank" id="DB04881">
    <property type="generic name" value="Elacridar"/>
</dbReference>
<dbReference type="DrugBank" id="DB05187">
    <property type="generic name" value="Elafibranor"/>
</dbReference>
<dbReference type="DrugBank" id="DB06210">
    <property type="generic name" value="Eltrombopag"/>
</dbReference>
<dbReference type="DrugBank" id="DB09038">
    <property type="generic name" value="Empagliflozin"/>
</dbReference>
<dbReference type="DrugBank" id="DB13874">
    <property type="generic name" value="Enasidenib"/>
</dbReference>
<dbReference type="DrugBank" id="DB11718">
    <property type="generic name" value="Encorafenib"/>
</dbReference>
<dbReference type="DrugBank" id="DB16157">
    <property type="generic name" value="Ensifentrine"/>
</dbReference>
<dbReference type="DrugBank" id="DB00530">
    <property type="generic name" value="Erlotinib"/>
</dbReference>
<dbReference type="DrugBank" id="DB11827">
    <property type="generic name" value="Ertugliflozin"/>
</dbReference>
<dbReference type="DrugBank" id="DB00783">
    <property type="generic name" value="Estradiol"/>
</dbReference>
<dbReference type="DrugBank" id="DB13952">
    <property type="generic name" value="Estradiol acetate"/>
</dbReference>
<dbReference type="DrugBank" id="DB13953">
    <property type="generic name" value="Estradiol benzoate"/>
</dbReference>
<dbReference type="DrugBank" id="DB13954">
    <property type="generic name" value="Estradiol cypionate"/>
</dbReference>
<dbReference type="DrugBank" id="DB13955">
    <property type="generic name" value="Estradiol dienanthate"/>
</dbReference>
<dbReference type="DrugBank" id="DB13956">
    <property type="generic name" value="Estradiol valerate"/>
</dbReference>
<dbReference type="DrugBank" id="DB00655">
    <property type="generic name" value="Estrone"/>
</dbReference>
<dbReference type="DrugBank" id="DB00773">
    <property type="generic name" value="Etoposide"/>
</dbReference>
<dbReference type="DrugBank" id="DB00973">
    <property type="generic name" value="Ezetimibe"/>
</dbReference>
<dbReference type="DrugBank" id="DB04854">
    <property type="generic name" value="Febuxostat"/>
</dbReference>
<dbReference type="DrugBank" id="DB12500">
    <property type="generic name" value="Fedratinib"/>
</dbReference>
<dbReference type="DrugBank" id="DB09279">
    <property type="generic name" value="Fimasartan"/>
</dbReference>
<dbReference type="DrugBank" id="DB00544">
    <property type="generic name" value="Fluorouracil"/>
</dbReference>
<dbReference type="DrugBank" id="DB00158">
    <property type="generic name" value="Folic acid"/>
</dbReference>
<dbReference type="DrugBank" id="DB12010">
    <property type="generic name" value="Fostamatinib"/>
</dbReference>
<dbReference type="DrugBank" id="DB11796">
    <property type="generic name" value="Fostemsavir"/>
</dbReference>
<dbReference type="DrugBank" id="DB02703">
    <property type="generic name" value="Fusidic acid"/>
</dbReference>
<dbReference type="DrugBank" id="DB15149">
    <property type="generic name" value="Futibatinib"/>
</dbReference>
<dbReference type="DrugBank" id="DB15097">
    <property type="generic name" value="Gefapixant"/>
</dbReference>
<dbReference type="DrugBank" id="DB00317">
    <property type="generic name" value="Gefitinib"/>
</dbReference>
<dbReference type="DrugBank" id="DB01645">
    <property type="generic name" value="Genistein"/>
</dbReference>
<dbReference type="DrugBank" id="DB12141">
    <property type="generic name" value="Gilteritinib"/>
</dbReference>
<dbReference type="DrugBank" id="DB11978">
    <property type="generic name" value="Glasdegib"/>
</dbReference>
<dbReference type="DrugBank" id="DB13879">
    <property type="generic name" value="Glecaprevir"/>
</dbReference>
<dbReference type="DrugBank" id="DB01016">
    <property type="generic name" value="Glyburide"/>
</dbReference>
<dbReference type="DrugBank" id="DB01094">
    <property type="generic name" value="Hesperetin"/>
</dbReference>
<dbReference type="DrugBank" id="DB14538">
    <property type="generic name" value="Hydrocortisone aceponate"/>
</dbReference>
<dbReference type="DrugBank" id="DB14539">
    <property type="generic name" value="Hydrocortisone acetate"/>
</dbReference>
<dbReference type="DrugBank" id="DB14540">
    <property type="generic name" value="Hydrocortisone butyrate"/>
</dbReference>
<dbReference type="DrugBank" id="DB14541">
    <property type="generic name" value="Hydrocortisone cypionate"/>
</dbReference>
<dbReference type="DrugBank" id="DB14542">
    <property type="generic name" value="Hydrocortisone phosphate"/>
</dbReference>
<dbReference type="DrugBank" id="DB14543">
    <property type="generic name" value="Hydrocortisone probutate"/>
</dbReference>
<dbReference type="DrugBank" id="DB14544">
    <property type="generic name" value="Hydrocortisone valerate"/>
</dbReference>
<dbReference type="DrugBank" id="DB09054">
    <property type="generic name" value="Idelalisib"/>
</dbReference>
<dbReference type="DrugBank" id="DB00619">
    <property type="generic name" value="Imatinib"/>
</dbReference>
<dbReference type="DrugBank" id="DB15275">
    <property type="generic name" value="Inavolisib"/>
</dbReference>
<dbReference type="DrugBank" id="DB11886">
    <property type="generic name" value="Infigratinib"/>
</dbReference>
<dbReference type="DrugBank" id="DB00762">
    <property type="generic name" value="Irinotecan"/>
</dbReference>
<dbReference type="DrugBank" id="DB11633">
    <property type="generic name" value="Isavuconazole"/>
</dbReference>
<dbReference type="DrugBank" id="DB06636">
    <property type="generic name" value="Isavuconazonium"/>
</dbReference>
<dbReference type="DrugBank" id="DB11757">
    <property type="generic name" value="Istradefylline"/>
</dbReference>
<dbReference type="DrugBank" id="DB01167">
    <property type="generic name" value="Itraconazole"/>
</dbReference>
<dbReference type="DrugBank" id="DB00602">
    <property type="generic name" value="Ivermectin"/>
</dbReference>
<dbReference type="DrugBank" id="DB16956">
    <property type="generic name" value="L-Acetylleucine"/>
</dbReference>
<dbReference type="DrugBank" id="DB00709">
    <property type="generic name" value="Lamivudine"/>
</dbReference>
<dbReference type="DrugBank" id="DB00448">
    <property type="generic name" value="Lansoprazole"/>
</dbReference>
<dbReference type="DrugBank" id="DB14723">
    <property type="generic name" value="Larotrectinib"/>
</dbReference>
<dbReference type="DrugBank" id="DB11732">
    <property type="generic name" value="Lasmiditan"/>
</dbReference>
<dbReference type="DrugBank" id="DB16216">
    <property type="generic name" value="Lazertinib"/>
</dbReference>
<dbReference type="DrugBank" id="DB09027">
    <property type="generic name" value="Ledipasvir"/>
</dbReference>
<dbReference type="DrugBank" id="DB01097">
    <property type="generic name" value="Leflunomide"/>
</dbReference>
<dbReference type="DrugBank" id="DB16217">
    <property type="generic name" value="Leniolisib"/>
</dbReference>
<dbReference type="DrugBank" id="DB09078">
    <property type="generic name" value="Lenvatinib"/>
</dbReference>
<dbReference type="DrugBank" id="DB12070">
    <property type="generic name" value="Letermovir"/>
</dbReference>
<dbReference type="DrugBank" id="DB17083">
    <property type="generic name" value="Linzagolix"/>
</dbReference>
<dbReference type="DrugBank" id="DB06448">
    <property type="generic name" value="Lonafarnib"/>
</dbReference>
<dbReference type="DrugBank" id="DB13125">
    <property type="generic name" value="Lusutrombopag"/>
</dbReference>
<dbReference type="DrugBank" id="DB06234">
    <property type="generic name" value="Maribavir"/>
</dbReference>
<dbReference type="DrugBank" id="DB14009">
    <property type="generic name" value="Medical Cannabis"/>
</dbReference>
<dbReference type="DrugBank" id="DB00563">
    <property type="generic name" value="Methotrexate"/>
</dbReference>
<dbReference type="DrugBank" id="DB01204">
    <property type="generic name" value="Mitoxantrone"/>
</dbReference>
<dbReference type="DrugBank" id="DB16390">
    <property type="generic name" value="Mobocertinib"/>
</dbReference>
<dbReference type="DrugBank" id="DB11763">
    <property type="generic name" value="Momelotinib"/>
</dbReference>
<dbReference type="DrugBank" id="DB00688">
    <property type="generic name" value="Mycophenolate mofetil"/>
</dbReference>
<dbReference type="DrugBank" id="DB14011">
    <property type="generic name" value="Nabiximols"/>
</dbReference>
<dbReference type="DrugBank" id="DB03467">
    <property type="generic name" value="Naringenin"/>
</dbReference>
<dbReference type="DrugBank" id="DB00220">
    <property type="generic name" value="Nelfinavir"/>
</dbReference>
<dbReference type="DrugBank" id="DB11820">
    <property type="generic name" value="Nifurtimox"/>
</dbReference>
<dbReference type="DrugBank" id="DB04868">
    <property type="generic name" value="Nilotinib"/>
</dbReference>
<dbReference type="DrugBank" id="DB09079">
    <property type="generic name" value="Nintedanib"/>
</dbReference>
<dbReference type="DrugBank" id="DB11793">
    <property type="generic name" value="Niraparib"/>
</dbReference>
<dbReference type="DrugBank" id="DB00698">
    <property type="generic name" value="Nitrofurantoin"/>
</dbReference>
<dbReference type="DrugBank" id="DB01051">
    <property type="generic name" value="Novobiocin"/>
</dbReference>
<dbReference type="DrugBank" id="DB09074">
    <property type="generic name" value="Olaparib"/>
</dbReference>
<dbReference type="DrugBank" id="DB16267">
    <property type="generic name" value="Olutasidenib"/>
</dbReference>
<dbReference type="DrugBank" id="DB09296">
    <property type="generic name" value="Ombitasvir"/>
</dbReference>
<dbReference type="DrugBank" id="DB00338">
    <property type="generic name" value="Omeprazole"/>
</dbReference>
<dbReference type="DrugBank" id="DB11632">
    <property type="generic name" value="Opicapone"/>
</dbReference>
<dbReference type="DrugBank" id="DB09330">
    <property type="generic name" value="Osimertinib"/>
</dbReference>
<dbReference type="DrugBank" id="DB13055">
    <property type="generic name" value="Oteseconazole"/>
</dbReference>
<dbReference type="DrugBank" id="DB00526">
    <property type="generic name" value="Oxaliplatin"/>
</dbReference>
<dbReference type="DrugBank" id="DB12612">
    <property type="generic name" value="Ozanimod"/>
</dbReference>
<dbReference type="DrugBank" id="DB11697">
    <property type="generic name" value="Pacritinib"/>
</dbReference>
<dbReference type="DrugBank" id="DB09073">
    <property type="generic name" value="Palbociclib"/>
</dbReference>
<dbReference type="DrugBank" id="DB05467">
    <property type="generic name" value="Palovarotene"/>
</dbReference>
<dbReference type="DrugBank" id="DB00213">
    <property type="generic name" value="Pantoprazole"/>
</dbReference>
<dbReference type="DrugBank" id="DB09297">
    <property type="generic name" value="Paritaprevir"/>
</dbReference>
<dbReference type="DrugBank" id="DB06589">
    <property type="generic name" value="Pazopanib"/>
</dbReference>
<dbReference type="DrugBank" id="DB00642">
    <property type="generic name" value="Pemetrexed"/>
</dbReference>
<dbReference type="DrugBank" id="DB15102">
    <property type="generic name" value="Pemigatinib"/>
</dbReference>
<dbReference type="DrugBank" id="DB13878">
    <property type="generic name" value="Pibrentasvir"/>
</dbReference>
<dbReference type="DrugBank" id="DB17472">
    <property type="generic name" value="Pirtobrutinib"/>
</dbReference>
<dbReference type="DrugBank" id="DB08860">
    <property type="generic name" value="Pitavastatin"/>
</dbReference>
<dbReference type="DrugBank" id="DB08901">
    <property type="generic name" value="Ponatinib"/>
</dbReference>
<dbReference type="DrugBank" id="DB06813">
    <property type="generic name" value="Pralatrexate"/>
</dbReference>
<dbReference type="DrugBank" id="DB15822">
    <property type="generic name" value="Pralsetinib"/>
</dbReference>
<dbReference type="DrugBank" id="DB01708">
    <property type="generic name" value="Prasterone"/>
</dbReference>
<dbReference type="DrugBank" id="DB00175">
    <property type="generic name" value="Pravastatin"/>
</dbReference>
<dbReference type="DrugBank" id="DB00457">
    <property type="generic name" value="Prazosin"/>
</dbReference>
<dbReference type="DrugBank" id="DB00396">
    <property type="generic name" value="Progesterone"/>
</dbReference>
<dbReference type="DrugBank" id="DB04216">
    <property type="generic name" value="Quercetin"/>
</dbReference>
<dbReference type="DrugBank" id="DB12874">
    <property type="generic name" value="Quizartinib"/>
</dbReference>
<dbReference type="DrugBank" id="DB01129">
    <property type="generic name" value="Rabeprazole"/>
</dbReference>
<dbReference type="DrugBank" id="DB00481">
    <property type="generic name" value="Raloxifene"/>
</dbReference>
<dbReference type="DrugBank" id="DB08896">
    <property type="generic name" value="Regorafenib"/>
</dbReference>
<dbReference type="DrugBank" id="DB11853">
    <property type="generic name" value="Relugolix"/>
</dbReference>
<dbReference type="DrugBank" id="DB16826">
    <property type="generic name" value="Repotrectinib"/>
</dbReference>
<dbReference type="DrugBank" id="DB12914">
    <property type="generic name" value="Resmetirom"/>
</dbReference>
<dbReference type="DrugBank" id="DB11855">
    <property type="generic name" value="Revefenacin"/>
</dbReference>
<dbReference type="DrugBank" id="DB08864">
    <property type="generic name" value="Rilpivirine"/>
</dbReference>
<dbReference type="DrugBank" id="DB00740">
    <property type="generic name" value="Riluzole"/>
</dbReference>
<dbReference type="DrugBank" id="DB12457">
    <property type="generic name" value="Rimegepant"/>
</dbReference>
<dbReference type="DrugBank" id="DB08931">
    <property type="generic name" value="Riociguat"/>
</dbReference>
<dbReference type="DrugBank" id="DB14840">
    <property type="generic name" value="Ripretinib"/>
</dbReference>
<dbReference type="DrugBank" id="DB15305">
    <property type="generic name" value="Risdiplam"/>
</dbReference>
<dbReference type="DrugBank" id="DB00503">
    <property type="generic name" value="Ritonavir"/>
</dbReference>
<dbReference type="DrugBank" id="DB06228">
    <property type="generic name" value="Rivaroxaban"/>
</dbReference>
<dbReference type="DrugBank" id="DB09291">
    <property type="generic name" value="Rolapitant"/>
</dbReference>
<dbReference type="DrugBank" id="DB01098">
    <property type="generic name" value="Rosuvastatin"/>
</dbReference>
<dbReference type="DrugBank" id="DB04847">
    <property type="generic name" value="Roxadustat"/>
</dbReference>
<dbReference type="DrugBank" id="DB12332">
    <property type="generic name" value="Rucaparib"/>
</dbReference>
<dbReference type="DrugBank" id="DB06654">
    <property type="generic name" value="Safinamide"/>
</dbReference>
<dbReference type="DrugBank" id="DB01232">
    <property type="generic name" value="Saquinavir"/>
</dbReference>
<dbReference type="DrugBank" id="DB12390">
    <property type="generic name" value="Seladelpar"/>
</dbReference>
<dbReference type="DrugBank" id="DB15685">
    <property type="generic name" value="Selpercatinib"/>
</dbReference>
<dbReference type="DrugBank" id="DB11689">
    <property type="generic name" value="Selumetinib"/>
</dbReference>
<dbReference type="DrugBank" id="DB06290">
    <property type="generic name" value="Simeprevir"/>
</dbReference>
<dbReference type="DrugBank" id="DB08934">
    <property type="generic name" value="Sofosbuvir"/>
</dbReference>
<dbReference type="DrugBank" id="DB00398">
    <property type="generic name" value="Sorafenib"/>
</dbReference>
<dbReference type="DrugBank" id="DB12713">
    <property type="generic name" value="Sotagliflozin"/>
</dbReference>
<dbReference type="DrugBank" id="DB15569">
    <property type="generic name" value="Sotorasib"/>
</dbReference>
<dbReference type="DrugBank" id="DB12548">
    <property type="generic name" value="Sparsentan"/>
</dbReference>
<dbReference type="DrugBank" id="DB09118">
    <property type="generic name" value="Stiripentol"/>
</dbReference>
<dbReference type="DrugBank" id="DB00795">
    <property type="generic name" value="Sulfasalazine"/>
</dbReference>
<dbReference type="DrugBank" id="DB00391">
    <property type="generic name" value="Sulpiride"/>
</dbReference>
<dbReference type="DrugBank" id="DB00669">
    <property type="generic name" value="Sumatriptan"/>
</dbReference>
<dbReference type="DrugBank" id="DB01268">
    <property type="generic name" value="Sunitinib"/>
</dbReference>
<dbReference type="DrugBank" id="DB11644">
    <property type="generic name" value="Tafamidis"/>
</dbReference>
<dbReference type="DrugBank" id="DB11760">
    <property type="generic name" value="Talazoparib"/>
</dbReference>
<dbReference type="DrugBank" id="DB00675">
    <property type="generic name" value="Tamoxifen"/>
</dbReference>
<dbReference type="DrugBank" id="DB04348">
    <property type="generic name" value="Taurocholic acid"/>
</dbReference>
<dbReference type="DrugBank" id="DB12887">
    <property type="generic name" value="Tazemetostat"/>
</dbReference>
<dbReference type="DrugBank" id="DB12020">
    <property type="generic name" value="Tecovirimat"/>
</dbReference>
<dbReference type="DrugBank" id="DB01079">
    <property type="generic name" value="Tegaserod"/>
</dbReference>
<dbReference type="DrugBank" id="DB00966">
    <property type="generic name" value="Telmisartan"/>
</dbReference>
<dbReference type="DrugBank" id="DB12095">
    <property type="generic name" value="Telotristat ethyl"/>
</dbReference>
<dbReference type="DrugBank" id="DB00853">
    <property type="generic name" value="Temozolomide"/>
</dbReference>
<dbReference type="DrugBank" id="DB00444">
    <property type="generic name" value="Teniposide"/>
</dbReference>
<dbReference type="DrugBank" id="DB09299">
    <property type="generic name" value="Tenofovir alafenamide"/>
</dbReference>
<dbReference type="DrugBank" id="DB15133">
    <property type="generic name" value="Tepotinib"/>
</dbReference>
<dbReference type="DrugBank" id="DB08880">
    <property type="generic name" value="Teriflunomide"/>
</dbReference>
<dbReference type="DrugBank" id="DB00624">
    <property type="generic name" value="Testosterone"/>
</dbReference>
<dbReference type="DrugBank" id="DB13943">
    <property type="generic name" value="Testosterone cypionate"/>
</dbReference>
<dbReference type="DrugBank" id="DB13944">
    <property type="generic name" value="Testosterone enanthate"/>
</dbReference>
<dbReference type="DrugBank" id="DB13946">
    <property type="generic name" value="Testosterone undecanoate"/>
</dbReference>
<dbReference type="DrugBank" id="DB11712">
    <property type="generic name" value="Tezacaftor"/>
</dbReference>
<dbReference type="DrugBank" id="DB11800">
    <property type="generic name" value="Tivozanib"/>
</dbReference>
<dbReference type="DrugBank" id="DB01685">
    <property type="generic name" value="Topiroxostat"/>
</dbReference>
<dbReference type="DrugBank" id="DB01030">
    <property type="generic name" value="Topotecan"/>
</dbReference>
<dbReference type="DrugBank" id="DB15266">
    <property type="generic name" value="Tovorafenib"/>
</dbReference>
<dbReference type="DrugBank" id="DB14962">
    <property type="generic name" value="Trastuzumab deruxtecan"/>
</dbReference>
<dbReference type="DrugBank" id="DB15442">
    <property type="generic name" value="Trilaciclib"/>
</dbReference>
<dbReference type="DrugBank" id="DB11652">
    <property type="generic name" value="Tucatinib"/>
</dbReference>
<dbReference type="DrugBank" id="DB15328">
    <property type="generic name" value="Ubrogepant"/>
</dbReference>
<dbReference type="DrugBank" id="DB15091">
    <property type="generic name" value="Upadacitinib"/>
</dbReference>
<dbReference type="DrugBank" id="DB12255">
    <property type="generic name" value="Vadadustat"/>
</dbReference>
<dbReference type="DrugBank" id="DB05294">
    <property type="generic name" value="Vandetanib"/>
</dbReference>
<dbReference type="DrugBank" id="DB11613">
    <property type="generic name" value="Velpatasvir"/>
</dbReference>
<dbReference type="DrugBank" id="DB08881">
    <property type="generic name" value="Vemurafenib"/>
</dbReference>
<dbReference type="DrugBank" id="DB11581">
    <property type="generic name" value="Venetoclax"/>
</dbReference>
<dbReference type="DrugBank" id="DB00285">
    <property type="generic name" value="Venlafaxine"/>
</dbReference>
<dbReference type="DrugBank" id="DB15456">
    <property type="generic name" value="Vericiguat"/>
</dbReference>
<dbReference type="DrugBank" id="DB00541">
    <property type="generic name" value="Vincristine"/>
</dbReference>
<dbReference type="DrugBank" id="DB08828">
    <property type="generic name" value="Vismodegib"/>
</dbReference>
<dbReference type="DrugBank" id="DB17097">
    <property type="generic name" value="Vorasidenib"/>
</dbReference>
<dbReference type="DrugBank" id="DB12026">
    <property type="generic name" value="Voxilaprevir"/>
</dbReference>
<dbReference type="DrugBank" id="DB00549">
    <property type="generic name" value="Zafirlukast"/>
</dbReference>
<dbReference type="DrugBank" id="DB00495">
    <property type="generic name" value="Zidovudine"/>
</dbReference>
<dbReference type="DrugCentral" id="Q9UNQ0"/>
<dbReference type="GuidetoPHARMACOLOGY" id="792"/>
<dbReference type="TCDB" id="3.A.1.204.2">
    <property type="family name" value="the atp-binding cassette (abc) superfamily"/>
</dbReference>
<dbReference type="GlyCosmos" id="Q9UNQ0">
    <property type="glycosylation" value="1 site, No reported glycans"/>
</dbReference>
<dbReference type="GlyGen" id="Q9UNQ0">
    <property type="glycosylation" value="1 site"/>
</dbReference>
<dbReference type="iPTMnet" id="Q9UNQ0"/>
<dbReference type="PhosphoSitePlus" id="Q9UNQ0"/>
<dbReference type="SwissPalm" id="Q9UNQ0"/>
<dbReference type="BioMuta" id="ABCG2"/>
<dbReference type="DMDM" id="67462103"/>
<dbReference type="jPOST" id="Q9UNQ0"/>
<dbReference type="MassIVE" id="Q9UNQ0"/>
<dbReference type="PaxDb" id="9606-ENSP00000237612"/>
<dbReference type="PeptideAtlas" id="Q9UNQ0"/>
<dbReference type="ProteomicsDB" id="85323">
    <molecule id="Q9UNQ0-1"/>
</dbReference>
<dbReference type="ProteomicsDB" id="85324">
    <molecule id="Q9UNQ0-2"/>
</dbReference>
<dbReference type="ABCD" id="Q9UNQ0">
    <property type="antibodies" value="1 sequenced antibody"/>
</dbReference>
<dbReference type="Antibodypedia" id="14577">
    <property type="antibodies" value="359 antibodies from 46 providers"/>
</dbReference>
<dbReference type="DNASU" id="9429"/>
<dbReference type="Ensembl" id="ENST00000237612.8">
    <molecule id="Q9UNQ0-1"/>
    <property type="protein sequence ID" value="ENSP00000237612.3"/>
    <property type="gene ID" value="ENSG00000118777.12"/>
</dbReference>
<dbReference type="Ensembl" id="ENST00000515655.5">
    <molecule id="Q9UNQ0-2"/>
    <property type="protein sequence ID" value="ENSP00000426917.1"/>
    <property type="gene ID" value="ENSG00000118777.12"/>
</dbReference>
<dbReference type="Ensembl" id="ENST00000650821.1">
    <molecule id="Q9UNQ0-1"/>
    <property type="protein sequence ID" value="ENSP00000498246.1"/>
    <property type="gene ID" value="ENSG00000118777.12"/>
</dbReference>
<dbReference type="GeneID" id="9429"/>
<dbReference type="KEGG" id="hsa:9429"/>
<dbReference type="MANE-Select" id="ENST00000237612.8">
    <property type="protein sequence ID" value="ENSP00000237612.3"/>
    <property type="RefSeq nucleotide sequence ID" value="NM_004827.3"/>
    <property type="RefSeq protein sequence ID" value="NP_004818.2"/>
</dbReference>
<dbReference type="UCSC" id="uc003hrg.4">
    <molecule id="Q9UNQ0-1"/>
    <property type="organism name" value="human"/>
</dbReference>
<dbReference type="AGR" id="HGNC:74"/>
<dbReference type="CTD" id="9429"/>
<dbReference type="DisGeNET" id="9429"/>
<dbReference type="GeneCards" id="ABCG2"/>
<dbReference type="HGNC" id="HGNC:74">
    <property type="gene designation" value="ABCG2"/>
</dbReference>
<dbReference type="HPA" id="ENSG00000118777">
    <property type="expression patterns" value="Tissue enhanced (intestine)"/>
</dbReference>
<dbReference type="MalaCards" id="ABCG2"/>
<dbReference type="MIM" id="138900">
    <property type="type" value="phenotype"/>
</dbReference>
<dbReference type="MIM" id="603756">
    <property type="type" value="gene"/>
</dbReference>
<dbReference type="MIM" id="614490">
    <property type="type" value="phenotype"/>
</dbReference>
<dbReference type="neXtProt" id="NX_Q9UNQ0"/>
<dbReference type="OpenTargets" id="ENSG00000118777"/>
<dbReference type="PharmGKB" id="PA390"/>
<dbReference type="VEuPathDB" id="HostDB:ENSG00000118777"/>
<dbReference type="eggNOG" id="KOG0061">
    <property type="taxonomic scope" value="Eukaryota"/>
</dbReference>
<dbReference type="GeneTree" id="ENSGT00940000162658"/>
<dbReference type="HOGENOM" id="CLU_000604_57_8_1"/>
<dbReference type="InParanoid" id="Q9UNQ0"/>
<dbReference type="OMA" id="MCVNGFM"/>
<dbReference type="OrthoDB" id="66620at2759"/>
<dbReference type="PAN-GO" id="Q9UNQ0">
    <property type="GO annotations" value="5 GO annotations based on evolutionary models"/>
</dbReference>
<dbReference type="PhylomeDB" id="Q9UNQ0"/>
<dbReference type="TreeFam" id="TF105211"/>
<dbReference type="BRENDA" id="7.6.2.2">
    <property type="organism ID" value="2681"/>
</dbReference>
<dbReference type="BRENDA" id="7.6.2.3">
    <property type="organism ID" value="2681"/>
</dbReference>
<dbReference type="PathwayCommons" id="Q9UNQ0"/>
<dbReference type="Reactome" id="R-HSA-1660661">
    <property type="pathway name" value="Sphingolipid de novo biosynthesis"/>
</dbReference>
<dbReference type="Reactome" id="R-HSA-189451">
    <property type="pathway name" value="Heme biosynthesis"/>
</dbReference>
<dbReference type="Reactome" id="R-HSA-189483">
    <property type="pathway name" value="Heme degradation"/>
</dbReference>
<dbReference type="Reactome" id="R-HSA-2161517">
    <property type="pathway name" value="Abacavir transmembrane transport"/>
</dbReference>
<dbReference type="Reactome" id="R-HSA-917937">
    <property type="pathway name" value="Iron uptake and transport"/>
</dbReference>
<dbReference type="Reactome" id="R-HSA-9725554">
    <property type="pathway name" value="Differentiation of Keratinocytes in Interfollicular Epidermis in Mammalian Skin"/>
</dbReference>
<dbReference type="Reactome" id="R-HSA-9753281">
    <property type="pathway name" value="Paracetamol ADME"/>
</dbReference>
<dbReference type="Reactome" id="R-HSA-9793528">
    <property type="pathway name" value="Ciprofloxacin ADME"/>
</dbReference>
<dbReference type="Reactome" id="R-HSA-9818032">
    <property type="pathway name" value="NFE2L2 regulating MDR associated enzymes"/>
</dbReference>
<dbReference type="SABIO-RK" id="Q9UNQ0"/>
<dbReference type="SignaLink" id="Q9UNQ0"/>
<dbReference type="SIGNOR" id="Q9UNQ0"/>
<dbReference type="BioGRID-ORCS" id="9429">
    <property type="hits" value="12 hits in 1152 CRISPR screens"/>
</dbReference>
<dbReference type="ChiTaRS" id="ABCG2">
    <property type="organism name" value="human"/>
</dbReference>
<dbReference type="GeneWiki" id="ABCG2"/>
<dbReference type="GenomeRNAi" id="9429"/>
<dbReference type="Pharos" id="Q9UNQ0">
    <property type="development level" value="Tchem"/>
</dbReference>
<dbReference type="PRO" id="PR:Q9UNQ0"/>
<dbReference type="Proteomes" id="UP000005640">
    <property type="component" value="Chromosome 4"/>
</dbReference>
<dbReference type="RNAct" id="Q9UNQ0">
    <property type="molecule type" value="protein"/>
</dbReference>
<dbReference type="Bgee" id="ENSG00000118777">
    <property type="expression patterns" value="Expressed in jejunal mucosa and 162 other cell types or tissues"/>
</dbReference>
<dbReference type="ExpressionAtlas" id="Q9UNQ0">
    <property type="expression patterns" value="baseline and differential"/>
</dbReference>
<dbReference type="GO" id="GO:0016324">
    <property type="term" value="C:apical plasma membrane"/>
    <property type="evidence" value="ECO:0000250"/>
    <property type="project" value="UniProtKB"/>
</dbReference>
<dbReference type="GO" id="GO:0031526">
    <property type="term" value="C:brush border membrane"/>
    <property type="evidence" value="ECO:0000314"/>
    <property type="project" value="UniProtKB"/>
</dbReference>
<dbReference type="GO" id="GO:0098591">
    <property type="term" value="C:external side of apical plasma membrane"/>
    <property type="evidence" value="ECO:0000250"/>
    <property type="project" value="ARUK-UCL"/>
</dbReference>
<dbReference type="GO" id="GO:0045121">
    <property type="term" value="C:membrane raft"/>
    <property type="evidence" value="ECO:0000314"/>
    <property type="project" value="UniProtKB"/>
</dbReference>
<dbReference type="GO" id="GO:0031966">
    <property type="term" value="C:mitochondrial membrane"/>
    <property type="evidence" value="ECO:0007669"/>
    <property type="project" value="UniProtKB-SubCell"/>
</dbReference>
<dbReference type="GO" id="GO:0005654">
    <property type="term" value="C:nucleoplasm"/>
    <property type="evidence" value="ECO:0000314"/>
    <property type="project" value="HPA"/>
</dbReference>
<dbReference type="GO" id="GO:0005886">
    <property type="term" value="C:plasma membrane"/>
    <property type="evidence" value="ECO:0000314"/>
    <property type="project" value="ARUK-UCL"/>
</dbReference>
<dbReference type="GO" id="GO:0008559">
    <property type="term" value="F:ABC-type xenobiotic transporter activity"/>
    <property type="evidence" value="ECO:0000314"/>
    <property type="project" value="GO_Central"/>
</dbReference>
<dbReference type="GO" id="GO:0005524">
    <property type="term" value="F:ATP binding"/>
    <property type="evidence" value="ECO:0007669"/>
    <property type="project" value="UniProtKB-KW"/>
</dbReference>
<dbReference type="GO" id="GO:0016887">
    <property type="term" value="F:ATP hydrolysis activity"/>
    <property type="evidence" value="ECO:0007669"/>
    <property type="project" value="InterPro"/>
</dbReference>
<dbReference type="GO" id="GO:0042626">
    <property type="term" value="F:ATPase-coupled transmembrane transporter activity"/>
    <property type="evidence" value="ECO:0000315"/>
    <property type="project" value="UniProtKB"/>
</dbReference>
<dbReference type="GO" id="GO:0015225">
    <property type="term" value="F:biotin transmembrane transporter activity"/>
    <property type="evidence" value="ECO:0000250"/>
    <property type="project" value="UniProtKB"/>
</dbReference>
<dbReference type="GO" id="GO:0015562">
    <property type="term" value="F:efflux transmembrane transporter activity"/>
    <property type="evidence" value="ECO:0000315"/>
    <property type="project" value="UniProtKB"/>
</dbReference>
<dbReference type="GO" id="GO:0042802">
    <property type="term" value="F:identical protein binding"/>
    <property type="evidence" value="ECO:0000353"/>
    <property type="project" value="IntAct"/>
</dbReference>
<dbReference type="GO" id="GO:0008514">
    <property type="term" value="F:organic anion transmembrane transporter activity"/>
    <property type="evidence" value="ECO:0000250"/>
    <property type="project" value="ARUK-UCL"/>
</dbReference>
<dbReference type="GO" id="GO:0042803">
    <property type="term" value="F:protein homodimerization activity"/>
    <property type="evidence" value="ECO:0000314"/>
    <property type="project" value="BHF-UCL"/>
</dbReference>
<dbReference type="GO" id="GO:0032217">
    <property type="term" value="F:riboflavin transmembrane transporter activity"/>
    <property type="evidence" value="ECO:0000314"/>
    <property type="project" value="UniProtKB"/>
</dbReference>
<dbReference type="GO" id="GO:0046624">
    <property type="term" value="F:sphingolipid transporter activity"/>
    <property type="evidence" value="ECO:0000304"/>
    <property type="project" value="Reactome"/>
</dbReference>
<dbReference type="GO" id="GO:0015143">
    <property type="term" value="F:urate transmembrane transporter activity"/>
    <property type="evidence" value="ECO:0000314"/>
    <property type="project" value="UniProtKB"/>
</dbReference>
<dbReference type="GO" id="GO:0042910">
    <property type="term" value="F:xenobiotic transmembrane transporter activity"/>
    <property type="evidence" value="ECO:0000250"/>
    <property type="project" value="ARUK-UCL"/>
</dbReference>
<dbReference type="GO" id="GO:0015878">
    <property type="term" value="P:biotin transport"/>
    <property type="evidence" value="ECO:0000250"/>
    <property type="project" value="UniProtKB"/>
</dbReference>
<dbReference type="GO" id="GO:1990748">
    <property type="term" value="P:cellular detoxification"/>
    <property type="evidence" value="ECO:0000314"/>
    <property type="project" value="GO_Central"/>
</dbReference>
<dbReference type="GO" id="GO:0140115">
    <property type="term" value="P:export across plasma membrane"/>
    <property type="evidence" value="ECO:0000250"/>
    <property type="project" value="ARUK-UCL"/>
</dbReference>
<dbReference type="GO" id="GO:0015711">
    <property type="term" value="P:organic anion transport"/>
    <property type="evidence" value="ECO:0000250"/>
    <property type="project" value="ARUK-UCL"/>
</dbReference>
<dbReference type="GO" id="GO:0097744">
    <property type="term" value="P:renal urate salt excretion"/>
    <property type="evidence" value="ECO:0000315"/>
    <property type="project" value="UniProtKB"/>
</dbReference>
<dbReference type="GO" id="GO:0032218">
    <property type="term" value="P:riboflavin transport"/>
    <property type="evidence" value="ECO:0000314"/>
    <property type="project" value="UniProtKB"/>
</dbReference>
<dbReference type="GO" id="GO:0030148">
    <property type="term" value="P:sphingolipid biosynthetic process"/>
    <property type="evidence" value="ECO:0000304"/>
    <property type="project" value="Reactome"/>
</dbReference>
<dbReference type="GO" id="GO:0070633">
    <property type="term" value="P:transepithelial transport"/>
    <property type="evidence" value="ECO:0000314"/>
    <property type="project" value="ARUK-UCL"/>
</dbReference>
<dbReference type="GO" id="GO:0055085">
    <property type="term" value="P:transmembrane transport"/>
    <property type="evidence" value="ECO:0000315"/>
    <property type="project" value="UniProtKB"/>
</dbReference>
<dbReference type="GO" id="GO:0150104">
    <property type="term" value="P:transport across blood-brain barrier"/>
    <property type="evidence" value="ECO:0000303"/>
    <property type="project" value="ARUK-UCL"/>
</dbReference>
<dbReference type="GO" id="GO:0046415">
    <property type="term" value="P:urate metabolic process"/>
    <property type="evidence" value="ECO:0000315"/>
    <property type="project" value="UniProtKB"/>
</dbReference>
<dbReference type="GO" id="GO:1990962">
    <property type="term" value="P:xenobiotic transport across blood-brain barrier"/>
    <property type="evidence" value="ECO:0000314"/>
    <property type="project" value="ARUK-UCL"/>
</dbReference>
<dbReference type="CDD" id="cd03213">
    <property type="entry name" value="ABCG_EPDR"/>
    <property type="match status" value="1"/>
</dbReference>
<dbReference type="FunFam" id="3.40.50.300:FF:000622">
    <property type="entry name" value="ATP-binding cassette sub-family G member 2"/>
    <property type="match status" value="1"/>
</dbReference>
<dbReference type="Gene3D" id="3.40.50.300">
    <property type="entry name" value="P-loop containing nucleotide triphosphate hydrolases"/>
    <property type="match status" value="1"/>
</dbReference>
<dbReference type="InterPro" id="IPR003593">
    <property type="entry name" value="AAA+_ATPase"/>
</dbReference>
<dbReference type="InterPro" id="IPR013525">
    <property type="entry name" value="ABC2_TM"/>
</dbReference>
<dbReference type="InterPro" id="IPR003439">
    <property type="entry name" value="ABC_transporter-like_ATP-bd"/>
</dbReference>
<dbReference type="InterPro" id="IPR043926">
    <property type="entry name" value="ABCG_dom"/>
</dbReference>
<dbReference type="InterPro" id="IPR050352">
    <property type="entry name" value="ABCG_transporters"/>
</dbReference>
<dbReference type="InterPro" id="IPR027417">
    <property type="entry name" value="P-loop_NTPase"/>
</dbReference>
<dbReference type="PANTHER" id="PTHR48041">
    <property type="entry name" value="ABC TRANSPORTER G FAMILY MEMBER 28"/>
    <property type="match status" value="1"/>
</dbReference>
<dbReference type="PANTHER" id="PTHR48041:SF92">
    <property type="entry name" value="BROAD SUBSTRATE SPECIFICITY ATP-BINDING CASSETTE TRANSPORTER ABCG2"/>
    <property type="match status" value="1"/>
</dbReference>
<dbReference type="Pfam" id="PF01061">
    <property type="entry name" value="ABC2_membrane"/>
    <property type="match status" value="1"/>
</dbReference>
<dbReference type="Pfam" id="PF19055">
    <property type="entry name" value="ABC2_membrane_7"/>
    <property type="match status" value="1"/>
</dbReference>
<dbReference type="Pfam" id="PF00005">
    <property type="entry name" value="ABC_tran"/>
    <property type="match status" value="1"/>
</dbReference>
<dbReference type="SMART" id="SM00382">
    <property type="entry name" value="AAA"/>
    <property type="match status" value="1"/>
</dbReference>
<dbReference type="SUPFAM" id="SSF52540">
    <property type="entry name" value="P-loop containing nucleoside triphosphate hydrolases"/>
    <property type="match status" value="1"/>
</dbReference>
<dbReference type="PROSITE" id="PS50893">
    <property type="entry name" value="ABC_TRANSPORTER_2"/>
    <property type="match status" value="1"/>
</dbReference>